<organism>
    <name type="scientific">Homo sapiens</name>
    <name type="common">Human</name>
    <dbReference type="NCBI Taxonomy" id="9606"/>
    <lineage>
        <taxon>Eukaryota</taxon>
        <taxon>Metazoa</taxon>
        <taxon>Chordata</taxon>
        <taxon>Craniata</taxon>
        <taxon>Vertebrata</taxon>
        <taxon>Euteleostomi</taxon>
        <taxon>Mammalia</taxon>
        <taxon>Eutheria</taxon>
        <taxon>Euarchontoglires</taxon>
        <taxon>Primates</taxon>
        <taxon>Haplorrhini</taxon>
        <taxon>Catarrhini</taxon>
        <taxon>Hominidae</taxon>
        <taxon>Homo</taxon>
    </lineage>
</organism>
<reference key="1">
    <citation type="journal article" date="1998" name="J. Biol. Chem.">
        <title>Identification of a novel AMP-activated protein kinase beta subunit isoform that is highly expressed in skeletal muscle.</title>
        <authorList>
            <person name="Thornton C."/>
            <person name="Snowden M.A."/>
            <person name="Carling D."/>
        </authorList>
    </citation>
    <scope>NUCLEOTIDE SEQUENCE [MRNA] (ISOFORM 1)</scope>
</reference>
<reference key="2">
    <citation type="journal article" date="2002" name="Mol. Cell. Probes">
        <title>Variant screening of PRKAB2, a type 2 diabetes mellitus susceptibility candidate gene on 1q in Pima Indians.</title>
        <authorList>
            <person name="Prochazka M."/>
            <person name="Farook V.S."/>
            <person name="Ossowski V."/>
            <person name="Wolford J.K."/>
            <person name="Bogardus C."/>
        </authorList>
    </citation>
    <scope>NUCLEOTIDE SEQUENCE [GENOMIC DNA]</scope>
</reference>
<reference key="3">
    <citation type="journal article" date="2004" name="Nat. Genet.">
        <title>Complete sequencing and characterization of 21,243 full-length human cDNAs.</title>
        <authorList>
            <person name="Ota T."/>
            <person name="Suzuki Y."/>
            <person name="Nishikawa T."/>
            <person name="Otsuki T."/>
            <person name="Sugiyama T."/>
            <person name="Irie R."/>
            <person name="Wakamatsu A."/>
            <person name="Hayashi K."/>
            <person name="Sato H."/>
            <person name="Nagai K."/>
            <person name="Kimura K."/>
            <person name="Makita H."/>
            <person name="Sekine M."/>
            <person name="Obayashi M."/>
            <person name="Nishi T."/>
            <person name="Shibahara T."/>
            <person name="Tanaka T."/>
            <person name="Ishii S."/>
            <person name="Yamamoto J."/>
            <person name="Saito K."/>
            <person name="Kawai Y."/>
            <person name="Isono Y."/>
            <person name="Nakamura Y."/>
            <person name="Nagahari K."/>
            <person name="Murakami K."/>
            <person name="Yasuda T."/>
            <person name="Iwayanagi T."/>
            <person name="Wagatsuma M."/>
            <person name="Shiratori A."/>
            <person name="Sudo H."/>
            <person name="Hosoiri T."/>
            <person name="Kaku Y."/>
            <person name="Kodaira H."/>
            <person name="Kondo H."/>
            <person name="Sugawara M."/>
            <person name="Takahashi M."/>
            <person name="Kanda K."/>
            <person name="Yokoi T."/>
            <person name="Furuya T."/>
            <person name="Kikkawa E."/>
            <person name="Omura Y."/>
            <person name="Abe K."/>
            <person name="Kamihara K."/>
            <person name="Katsuta N."/>
            <person name="Sato K."/>
            <person name="Tanikawa M."/>
            <person name="Yamazaki M."/>
            <person name="Ninomiya K."/>
            <person name="Ishibashi T."/>
            <person name="Yamashita H."/>
            <person name="Murakawa K."/>
            <person name="Fujimori K."/>
            <person name="Tanai H."/>
            <person name="Kimata M."/>
            <person name="Watanabe M."/>
            <person name="Hiraoka S."/>
            <person name="Chiba Y."/>
            <person name="Ishida S."/>
            <person name="Ono Y."/>
            <person name="Takiguchi S."/>
            <person name="Watanabe S."/>
            <person name="Yosida M."/>
            <person name="Hotuta T."/>
            <person name="Kusano J."/>
            <person name="Kanehori K."/>
            <person name="Takahashi-Fujii A."/>
            <person name="Hara H."/>
            <person name="Tanase T.-O."/>
            <person name="Nomura Y."/>
            <person name="Togiya S."/>
            <person name="Komai F."/>
            <person name="Hara R."/>
            <person name="Takeuchi K."/>
            <person name="Arita M."/>
            <person name="Imose N."/>
            <person name="Musashino K."/>
            <person name="Yuuki H."/>
            <person name="Oshima A."/>
            <person name="Sasaki N."/>
            <person name="Aotsuka S."/>
            <person name="Yoshikawa Y."/>
            <person name="Matsunawa H."/>
            <person name="Ichihara T."/>
            <person name="Shiohata N."/>
            <person name="Sano S."/>
            <person name="Moriya S."/>
            <person name="Momiyama H."/>
            <person name="Satoh N."/>
            <person name="Takami S."/>
            <person name="Terashima Y."/>
            <person name="Suzuki O."/>
            <person name="Nakagawa S."/>
            <person name="Senoh A."/>
            <person name="Mizoguchi H."/>
            <person name="Goto Y."/>
            <person name="Shimizu F."/>
            <person name="Wakebe H."/>
            <person name="Hishigaki H."/>
            <person name="Watanabe T."/>
            <person name="Sugiyama A."/>
            <person name="Takemoto M."/>
            <person name="Kawakami B."/>
            <person name="Yamazaki M."/>
            <person name="Watanabe K."/>
            <person name="Kumagai A."/>
            <person name="Itakura S."/>
            <person name="Fukuzumi Y."/>
            <person name="Fujimori Y."/>
            <person name="Komiyama M."/>
            <person name="Tashiro H."/>
            <person name="Tanigami A."/>
            <person name="Fujiwara T."/>
            <person name="Ono T."/>
            <person name="Yamada K."/>
            <person name="Fujii Y."/>
            <person name="Ozaki K."/>
            <person name="Hirao M."/>
            <person name="Ohmori Y."/>
            <person name="Kawabata A."/>
            <person name="Hikiji T."/>
            <person name="Kobatake N."/>
            <person name="Inagaki H."/>
            <person name="Ikema Y."/>
            <person name="Okamoto S."/>
            <person name="Okitani R."/>
            <person name="Kawakami T."/>
            <person name="Noguchi S."/>
            <person name="Itoh T."/>
            <person name="Shigeta K."/>
            <person name="Senba T."/>
            <person name="Matsumura K."/>
            <person name="Nakajima Y."/>
            <person name="Mizuno T."/>
            <person name="Morinaga M."/>
            <person name="Sasaki M."/>
            <person name="Togashi T."/>
            <person name="Oyama M."/>
            <person name="Hata H."/>
            <person name="Watanabe M."/>
            <person name="Komatsu T."/>
            <person name="Mizushima-Sugano J."/>
            <person name="Satoh T."/>
            <person name="Shirai Y."/>
            <person name="Takahashi Y."/>
            <person name="Nakagawa K."/>
            <person name="Okumura K."/>
            <person name="Nagase T."/>
            <person name="Nomura N."/>
            <person name="Kikuchi H."/>
            <person name="Masuho Y."/>
            <person name="Yamashita R."/>
            <person name="Nakai K."/>
            <person name="Yada T."/>
            <person name="Nakamura Y."/>
            <person name="Ohara O."/>
            <person name="Isogai T."/>
            <person name="Sugano S."/>
        </authorList>
    </citation>
    <scope>NUCLEOTIDE SEQUENCE [LARGE SCALE MRNA] (ISOFORMS 1 AND 2)</scope>
    <source>
        <tissue>Brain</tissue>
        <tissue>Trachea</tissue>
    </source>
</reference>
<reference key="4">
    <citation type="journal article" date="2006" name="Nature">
        <title>The DNA sequence and biological annotation of human chromosome 1.</title>
        <authorList>
            <person name="Gregory S.G."/>
            <person name="Barlow K.F."/>
            <person name="McLay K.E."/>
            <person name="Kaul R."/>
            <person name="Swarbreck D."/>
            <person name="Dunham A."/>
            <person name="Scott C.E."/>
            <person name="Howe K.L."/>
            <person name="Woodfine K."/>
            <person name="Spencer C.C.A."/>
            <person name="Jones M.C."/>
            <person name="Gillson C."/>
            <person name="Searle S."/>
            <person name="Zhou Y."/>
            <person name="Kokocinski F."/>
            <person name="McDonald L."/>
            <person name="Evans R."/>
            <person name="Phillips K."/>
            <person name="Atkinson A."/>
            <person name="Cooper R."/>
            <person name="Jones C."/>
            <person name="Hall R.E."/>
            <person name="Andrews T.D."/>
            <person name="Lloyd C."/>
            <person name="Ainscough R."/>
            <person name="Almeida J.P."/>
            <person name="Ambrose K.D."/>
            <person name="Anderson F."/>
            <person name="Andrew R.W."/>
            <person name="Ashwell R.I.S."/>
            <person name="Aubin K."/>
            <person name="Babbage A.K."/>
            <person name="Bagguley C.L."/>
            <person name="Bailey J."/>
            <person name="Beasley H."/>
            <person name="Bethel G."/>
            <person name="Bird C.P."/>
            <person name="Bray-Allen S."/>
            <person name="Brown J.Y."/>
            <person name="Brown A.J."/>
            <person name="Buckley D."/>
            <person name="Burton J."/>
            <person name="Bye J."/>
            <person name="Carder C."/>
            <person name="Chapman J.C."/>
            <person name="Clark S.Y."/>
            <person name="Clarke G."/>
            <person name="Clee C."/>
            <person name="Cobley V."/>
            <person name="Collier R.E."/>
            <person name="Corby N."/>
            <person name="Coville G.J."/>
            <person name="Davies J."/>
            <person name="Deadman R."/>
            <person name="Dunn M."/>
            <person name="Earthrowl M."/>
            <person name="Ellington A.G."/>
            <person name="Errington H."/>
            <person name="Frankish A."/>
            <person name="Frankland J."/>
            <person name="French L."/>
            <person name="Garner P."/>
            <person name="Garnett J."/>
            <person name="Gay L."/>
            <person name="Ghori M.R.J."/>
            <person name="Gibson R."/>
            <person name="Gilby L.M."/>
            <person name="Gillett W."/>
            <person name="Glithero R.J."/>
            <person name="Grafham D.V."/>
            <person name="Griffiths C."/>
            <person name="Griffiths-Jones S."/>
            <person name="Grocock R."/>
            <person name="Hammond S."/>
            <person name="Harrison E.S.I."/>
            <person name="Hart E."/>
            <person name="Haugen E."/>
            <person name="Heath P.D."/>
            <person name="Holmes S."/>
            <person name="Holt K."/>
            <person name="Howden P.J."/>
            <person name="Hunt A.R."/>
            <person name="Hunt S.E."/>
            <person name="Hunter G."/>
            <person name="Isherwood J."/>
            <person name="James R."/>
            <person name="Johnson C."/>
            <person name="Johnson D."/>
            <person name="Joy A."/>
            <person name="Kay M."/>
            <person name="Kershaw J.K."/>
            <person name="Kibukawa M."/>
            <person name="Kimberley A.M."/>
            <person name="King A."/>
            <person name="Knights A.J."/>
            <person name="Lad H."/>
            <person name="Laird G."/>
            <person name="Lawlor S."/>
            <person name="Leongamornlert D.A."/>
            <person name="Lloyd D.M."/>
            <person name="Loveland J."/>
            <person name="Lovell J."/>
            <person name="Lush M.J."/>
            <person name="Lyne R."/>
            <person name="Martin S."/>
            <person name="Mashreghi-Mohammadi M."/>
            <person name="Matthews L."/>
            <person name="Matthews N.S.W."/>
            <person name="McLaren S."/>
            <person name="Milne S."/>
            <person name="Mistry S."/>
            <person name="Moore M.J.F."/>
            <person name="Nickerson T."/>
            <person name="O'Dell C.N."/>
            <person name="Oliver K."/>
            <person name="Palmeiri A."/>
            <person name="Palmer S.A."/>
            <person name="Parker A."/>
            <person name="Patel D."/>
            <person name="Pearce A.V."/>
            <person name="Peck A.I."/>
            <person name="Pelan S."/>
            <person name="Phelps K."/>
            <person name="Phillimore B.J."/>
            <person name="Plumb R."/>
            <person name="Rajan J."/>
            <person name="Raymond C."/>
            <person name="Rouse G."/>
            <person name="Saenphimmachak C."/>
            <person name="Sehra H.K."/>
            <person name="Sheridan E."/>
            <person name="Shownkeen R."/>
            <person name="Sims S."/>
            <person name="Skuce C.D."/>
            <person name="Smith M."/>
            <person name="Steward C."/>
            <person name="Subramanian S."/>
            <person name="Sycamore N."/>
            <person name="Tracey A."/>
            <person name="Tromans A."/>
            <person name="Van Helmond Z."/>
            <person name="Wall M."/>
            <person name="Wallis J.M."/>
            <person name="White S."/>
            <person name="Whitehead S.L."/>
            <person name="Wilkinson J.E."/>
            <person name="Willey D.L."/>
            <person name="Williams H."/>
            <person name="Wilming L."/>
            <person name="Wray P.W."/>
            <person name="Wu Z."/>
            <person name="Coulson A."/>
            <person name="Vaudin M."/>
            <person name="Sulston J.E."/>
            <person name="Durbin R.M."/>
            <person name="Hubbard T."/>
            <person name="Wooster R."/>
            <person name="Dunham I."/>
            <person name="Carter N.P."/>
            <person name="McVean G."/>
            <person name="Ross M.T."/>
            <person name="Harrow J."/>
            <person name="Olson M.V."/>
            <person name="Beck S."/>
            <person name="Rogers J."/>
            <person name="Bentley D.R."/>
        </authorList>
    </citation>
    <scope>NUCLEOTIDE SEQUENCE [LARGE SCALE GENOMIC DNA]</scope>
</reference>
<reference key="5">
    <citation type="submission" date="2005-07" db="EMBL/GenBank/DDBJ databases">
        <authorList>
            <person name="Mural R.J."/>
            <person name="Istrail S."/>
            <person name="Sutton G.G."/>
            <person name="Florea L."/>
            <person name="Halpern A.L."/>
            <person name="Mobarry C.M."/>
            <person name="Lippert R."/>
            <person name="Walenz B."/>
            <person name="Shatkay H."/>
            <person name="Dew I."/>
            <person name="Miller J.R."/>
            <person name="Flanigan M.J."/>
            <person name="Edwards N.J."/>
            <person name="Bolanos R."/>
            <person name="Fasulo D."/>
            <person name="Halldorsson B.V."/>
            <person name="Hannenhalli S."/>
            <person name="Turner R."/>
            <person name="Yooseph S."/>
            <person name="Lu F."/>
            <person name="Nusskern D.R."/>
            <person name="Shue B.C."/>
            <person name="Zheng X.H."/>
            <person name="Zhong F."/>
            <person name="Delcher A.L."/>
            <person name="Huson D.H."/>
            <person name="Kravitz S.A."/>
            <person name="Mouchard L."/>
            <person name="Reinert K."/>
            <person name="Remington K.A."/>
            <person name="Clark A.G."/>
            <person name="Waterman M.S."/>
            <person name="Eichler E.E."/>
            <person name="Adams M.D."/>
            <person name="Hunkapiller M.W."/>
            <person name="Myers E.W."/>
            <person name="Venter J.C."/>
        </authorList>
    </citation>
    <scope>NUCLEOTIDE SEQUENCE [LARGE SCALE GENOMIC DNA]</scope>
</reference>
<reference key="6">
    <citation type="journal article" date="2004" name="Genome Res.">
        <title>The status, quality, and expansion of the NIH full-length cDNA project: the Mammalian Gene Collection (MGC).</title>
        <authorList>
            <consortium name="The MGC Project Team"/>
        </authorList>
    </citation>
    <scope>NUCLEOTIDE SEQUENCE [LARGE SCALE MRNA] (ISOFORM 1)</scope>
    <source>
        <tissue>Pancreas</tissue>
    </source>
</reference>
<reference key="7">
    <citation type="journal article" date="2008" name="Mol. Cell">
        <title>Kinase-selective enrichment enables quantitative phosphoproteomics of the kinome across the cell cycle.</title>
        <authorList>
            <person name="Daub H."/>
            <person name="Olsen J.V."/>
            <person name="Bairlein M."/>
            <person name="Gnad F."/>
            <person name="Oppermann F.S."/>
            <person name="Korner R."/>
            <person name="Greff Z."/>
            <person name="Keri G."/>
            <person name="Stemmann O."/>
            <person name="Mann M."/>
        </authorList>
    </citation>
    <scope>PHOSPHORYLATION [LARGE SCALE ANALYSIS] AT SER-108</scope>
    <scope>IDENTIFICATION BY MASS SPECTROMETRY [LARGE SCALE ANALYSIS]</scope>
    <source>
        <tissue>Cervix carcinoma</tissue>
    </source>
</reference>
<reference key="8">
    <citation type="journal article" date="2008" name="Proc. Natl. Acad. Sci. U.S.A.">
        <title>A quantitative atlas of mitotic phosphorylation.</title>
        <authorList>
            <person name="Dephoure N."/>
            <person name="Zhou C."/>
            <person name="Villen J."/>
            <person name="Beausoleil S.A."/>
            <person name="Bakalarski C.E."/>
            <person name="Elledge S.J."/>
            <person name="Gygi S.P."/>
        </authorList>
    </citation>
    <scope>PHOSPHORYLATION [LARGE SCALE ANALYSIS] AT SER-108 AND SER-184</scope>
    <scope>IDENTIFICATION BY MASS SPECTROMETRY [LARGE SCALE ANALYSIS]</scope>
    <source>
        <tissue>Cervix carcinoma</tissue>
    </source>
</reference>
<reference key="9">
    <citation type="journal article" date="2008" name="Proteomics">
        <title>Large-scale phosphoproteome analysis of human liver tissue by enrichment and fractionation of phosphopeptides with strong anion exchange chromatography.</title>
        <authorList>
            <person name="Han G."/>
            <person name="Ye M."/>
            <person name="Zhou H."/>
            <person name="Jiang X."/>
            <person name="Feng S."/>
            <person name="Jiang X."/>
            <person name="Tian R."/>
            <person name="Wan D."/>
            <person name="Zou H."/>
            <person name="Gu J."/>
        </authorList>
    </citation>
    <scope>PHOSPHORYLATION [LARGE SCALE ANALYSIS] AT SER-108</scope>
    <scope>IDENTIFICATION BY MASS SPECTROMETRY [LARGE SCALE ANALYSIS]</scope>
    <source>
        <tissue>Liver</tissue>
    </source>
</reference>
<reference key="10">
    <citation type="journal article" date="2009" name="Anal. Chem.">
        <title>Lys-N and trypsin cover complementary parts of the phosphoproteome in a refined SCX-based approach.</title>
        <authorList>
            <person name="Gauci S."/>
            <person name="Helbig A.O."/>
            <person name="Slijper M."/>
            <person name="Krijgsveld J."/>
            <person name="Heck A.J."/>
            <person name="Mohammed S."/>
        </authorList>
    </citation>
    <scope>IDENTIFICATION BY MASS SPECTROMETRY [LARGE SCALE ANALYSIS]</scope>
</reference>
<reference key="11">
    <citation type="journal article" date="2009" name="Mol. Cell. Proteomics">
        <title>Large-scale proteomics analysis of the human kinome.</title>
        <authorList>
            <person name="Oppermann F.S."/>
            <person name="Gnad F."/>
            <person name="Olsen J.V."/>
            <person name="Hornberger R."/>
            <person name="Greff Z."/>
            <person name="Keri G."/>
            <person name="Mann M."/>
            <person name="Daub H."/>
        </authorList>
    </citation>
    <scope>PHOSPHORYLATION [LARGE SCALE ANALYSIS] AT SER-108</scope>
    <scope>IDENTIFICATION BY MASS SPECTROMETRY [LARGE SCALE ANALYSIS]</scope>
</reference>
<reference key="12">
    <citation type="journal article" date="2009" name="Sci. Signal.">
        <title>Quantitative phosphoproteomic analysis of T cell receptor signaling reveals system-wide modulation of protein-protein interactions.</title>
        <authorList>
            <person name="Mayya V."/>
            <person name="Lundgren D.H."/>
            <person name="Hwang S.-I."/>
            <person name="Rezaul K."/>
            <person name="Wu L."/>
            <person name="Eng J.K."/>
            <person name="Rodionov V."/>
            <person name="Han D.K."/>
        </authorList>
    </citation>
    <scope>PHOSPHORYLATION [LARGE SCALE ANALYSIS] AT SER-108</scope>
    <scope>IDENTIFICATION BY MASS SPECTROMETRY [LARGE SCALE ANALYSIS]</scope>
    <source>
        <tissue>Leukemic T-cell</tissue>
    </source>
</reference>
<reference key="13">
    <citation type="journal article" date="2010" name="Sci. Signal.">
        <title>Quantitative phosphoproteomics reveals widespread full phosphorylation site occupancy during mitosis.</title>
        <authorList>
            <person name="Olsen J.V."/>
            <person name="Vermeulen M."/>
            <person name="Santamaria A."/>
            <person name="Kumar C."/>
            <person name="Miller M.L."/>
            <person name="Jensen L.J."/>
            <person name="Gnad F."/>
            <person name="Cox J."/>
            <person name="Jensen T.S."/>
            <person name="Nigg E.A."/>
            <person name="Brunak S."/>
            <person name="Mann M."/>
        </authorList>
    </citation>
    <scope>PHOSPHORYLATION [LARGE SCALE ANALYSIS] AT SER-184</scope>
    <scope>IDENTIFICATION BY MASS SPECTROMETRY [LARGE SCALE ANALYSIS]</scope>
    <source>
        <tissue>Cervix carcinoma</tissue>
    </source>
</reference>
<reference key="14">
    <citation type="journal article" date="2011" name="Autophagy">
        <title>Ulk1-mediated phosphorylation of AMPK constitutes a negative regulatory feedback loop.</title>
        <authorList>
            <person name="Loffler A.S."/>
            <person name="Alers S."/>
            <person name="Dieterle A.M."/>
            <person name="Keppeler H."/>
            <person name="Franz-Wachtel M."/>
            <person name="Kundu M."/>
            <person name="Campbell D.G."/>
            <person name="Wesselborg S."/>
            <person name="Alessi D.R."/>
            <person name="Stork B."/>
        </authorList>
    </citation>
    <scope>PHOSPHORYLATION BY ULK1 AND ULK2</scope>
</reference>
<reference key="15">
    <citation type="journal article" date="2007" name="Circ. Res.">
        <title>AMP-activated protein kinase in metabolic control and insulin signaling.</title>
        <authorList>
            <person name="Towler M.C."/>
            <person name="Hardie D.G."/>
        </authorList>
    </citation>
    <scope>REVIEW ON FUNCTION</scope>
</reference>
<reference key="16">
    <citation type="journal article" date="2007" name="Nat. Rev. Mol. Cell Biol.">
        <title>AMP-activated/SNF1 protein kinases: conserved guardians of cellular energy.</title>
        <authorList>
            <person name="Hardie D.G."/>
        </authorList>
    </citation>
    <scope>REVIEW ON FUNCTION</scope>
</reference>
<reference key="17">
    <citation type="journal article" date="2011" name="BMC Syst. Biol.">
        <title>Initial characterization of the human central proteome.</title>
        <authorList>
            <person name="Burkard T.R."/>
            <person name="Planyavsky M."/>
            <person name="Kaupe I."/>
            <person name="Breitwieser F.P."/>
            <person name="Buerckstuemmer T."/>
            <person name="Bennett K.L."/>
            <person name="Superti-Furga G."/>
            <person name="Colinge J."/>
        </authorList>
    </citation>
    <scope>IDENTIFICATION BY MASS SPECTROMETRY [LARGE SCALE ANALYSIS]</scope>
</reference>
<reference key="18">
    <citation type="journal article" date="2011" name="Sci. Signal.">
        <title>System-wide temporal characterization of the proteome and phosphoproteome of human embryonic stem cell differentiation.</title>
        <authorList>
            <person name="Rigbolt K.T."/>
            <person name="Prokhorova T.A."/>
            <person name="Akimov V."/>
            <person name="Henningsen J."/>
            <person name="Johansen P.T."/>
            <person name="Kratchmarova I."/>
            <person name="Kassem M."/>
            <person name="Mann M."/>
            <person name="Olsen J.V."/>
            <person name="Blagoev B."/>
        </authorList>
    </citation>
    <scope>PHOSPHORYLATION [LARGE SCALE ANALYSIS] AT SER-108</scope>
    <scope>IDENTIFICATION BY MASS SPECTROMETRY [LARGE SCALE ANALYSIS]</scope>
</reference>
<reference key="19">
    <citation type="journal article" date="2013" name="J. Proteome Res.">
        <title>Toward a comprehensive characterization of a human cancer cell phosphoproteome.</title>
        <authorList>
            <person name="Zhou H."/>
            <person name="Di Palma S."/>
            <person name="Preisinger C."/>
            <person name="Peng M."/>
            <person name="Polat A.N."/>
            <person name="Heck A.J."/>
            <person name="Mohammed S."/>
        </authorList>
    </citation>
    <scope>PHOSPHORYLATION [LARGE SCALE ANALYSIS] AT SER-108</scope>
    <scope>IDENTIFICATION BY MASS SPECTROMETRY [LARGE SCALE ANALYSIS]</scope>
    <source>
        <tissue>Cervix carcinoma</tissue>
        <tissue>Erythroleukemia</tissue>
    </source>
</reference>
<reference key="20">
    <citation type="journal article" date="2014" name="J. Proteomics">
        <title>An enzyme assisted RP-RPLC approach for in-depth analysis of human liver phosphoproteome.</title>
        <authorList>
            <person name="Bian Y."/>
            <person name="Song C."/>
            <person name="Cheng K."/>
            <person name="Dong M."/>
            <person name="Wang F."/>
            <person name="Huang J."/>
            <person name="Sun D."/>
            <person name="Wang L."/>
            <person name="Ye M."/>
            <person name="Zou H."/>
        </authorList>
    </citation>
    <scope>PHOSPHORYLATION [LARGE SCALE ANALYSIS] AT SER-95; SER-108; THR-148; SER-158 AND SER-170</scope>
    <scope>IDENTIFICATION BY MASS SPECTROMETRY [LARGE SCALE ANALYSIS]</scope>
    <source>
        <tissue>Liver</tissue>
    </source>
</reference>
<reference key="21">
    <citation type="journal article" date="2007" name="Nature">
        <title>Structural basis for AMP binding to mammalian AMP-activated protein kinase.</title>
        <authorList>
            <person name="Xiao B."/>
            <person name="Heath R."/>
            <person name="Saiu P."/>
            <person name="Leiper F.C."/>
            <person name="Leone P."/>
            <person name="Jing C."/>
            <person name="Walker P.A."/>
            <person name="Haire L."/>
            <person name="Eccleston J.F."/>
            <person name="Davis C.T."/>
            <person name="Martin S.R."/>
            <person name="Carling D."/>
            <person name="Gamblin S.J."/>
        </authorList>
    </citation>
    <scope>X-RAY CRYSTALLOGRAPHY (2.1 ANGSTROMS) OF 187-272 IN COMPLEX WITH PRKAA1 AND PRKAG1</scope>
</reference>
<reference key="22">
    <citation type="journal article" date="2011" name="Nature">
        <title>Structure of mammalian AMPK and its regulation by ADP.</title>
        <authorList>
            <person name="Xiao B."/>
            <person name="Sanders M.J."/>
            <person name="Underwood E."/>
            <person name="Heath R."/>
            <person name="Mayer F.V."/>
            <person name="Carmena D."/>
            <person name="Jing C."/>
            <person name="Walker P.A."/>
            <person name="Eccleston J.F."/>
            <person name="Haire L.F."/>
            <person name="Saiu P."/>
            <person name="Howell S.A."/>
            <person name="Aasland R."/>
            <person name="Martin S.R."/>
            <person name="Carling D."/>
            <person name="Gamblin S.J."/>
        </authorList>
    </citation>
    <scope>X-RAY CRYSTALLOGRAPHY (2.51 ANGSTROMS) OF 187-272 IN COMPLEX WITH PRKAA1 AND PRKAG1</scope>
    <scope>MUTAGENESIS OF HIS-235</scope>
</reference>
<gene>
    <name type="primary">PRKAB2</name>
</gene>
<accession>O43741</accession>
<accession>A8K9V5</accession>
<accession>B4DH06</accession>
<accession>Q5VXY0</accession>
<sequence>MGNTTSDRVSGERHGAKAARSEGAGGHAPGKEHKIMVGSTDDPSVFSLPDSKLPGDKEFVSWQQDLEDSVKPTQQARPTVIRWSEGGKEVFISGSFNNWSTKIPLIKSHNDFVAILDLPEGEHQYKFFVDGQWVHDPSEPVVTSQLGTINNLIHVKKSDFEVFDALKLDSMESSETSCRDLSSSPPGPYGQEMYAFRSEERFKSPPILPPHLLQVILNKDTNISCDPALLPEPNHVMLNHLYALSIKDSVMVLSATHRYKKKYVTTLLYKPI</sequence>
<comment type="function">
    <text>Non-catalytic subunit of AMP-activated protein kinase (AMPK), an energy sensor protein kinase that plays a key role in regulating cellular energy metabolism. In response to reduction of intracellular ATP levels, AMPK activates energy-producing pathways and inhibits energy-consuming processes: inhibits protein, carbohydrate and lipid biosynthesis, as well as cell growth and proliferation. AMPK acts via direct phosphorylation of metabolic enzymes, and by longer-term effects via phosphorylation of transcription regulators. Also acts as a regulator of cellular polarity by remodeling the actin cytoskeleton; probably by indirectly activating myosin. Beta non-catalytic subunit acts as a scaffold on which the AMPK complex assembles, via its C-terminus that bridges alpha (PRKAA1 or PRKAA2) and gamma subunits (PRKAG1, PRKAG2 or PRKAG3).</text>
</comment>
<comment type="subunit">
    <text evidence="3 4">AMPK is a heterotrimer of an alpha catalytic subunit (PRKAA1 or PRKAA2), a beta (PRKAB1 or PRKAB2) and a gamma non-catalytic subunits (PRKAG1, PRKAG2 or PRKAG3).</text>
</comment>
<comment type="interaction">
    <interactant intactId="EBI-1053424">
        <id>O43741</id>
    </interactant>
    <interactant intactId="EBI-12318443">
        <id>Q8NFV4-4</id>
        <label>ABHD11</label>
    </interactant>
    <organismsDiffer>false</organismsDiffer>
    <experiments>3</experiments>
</comment>
<comment type="interaction">
    <interactant intactId="EBI-1053424">
        <id>O43741</id>
    </interactant>
    <interactant intactId="EBI-11976299">
        <id>Q5BKX5-3</id>
        <label>ACTMAP</label>
    </interactant>
    <organismsDiffer>false</organismsDiffer>
    <experiments>3</experiments>
</comment>
<comment type="interaction">
    <interactant intactId="EBI-1053424">
        <id>O43741</id>
    </interactant>
    <interactant intactId="EBI-10173507">
        <id>Q6UY14-3</id>
        <label>ADAMTSL4</label>
    </interactant>
    <organismsDiffer>false</organismsDiffer>
    <experiments>4</experiments>
</comment>
<comment type="interaction">
    <interactant intactId="EBI-1053424">
        <id>O43741</id>
    </interactant>
    <interactant intactId="EBI-12224467">
        <id>Q9NYG5-2</id>
        <label>ANAPC11</label>
    </interactant>
    <organismsDiffer>false</organismsDiffer>
    <experiments>3</experiments>
</comment>
<comment type="interaction">
    <interactant intactId="EBI-1053424">
        <id>O43741</id>
    </interactant>
    <interactant intactId="EBI-948603">
        <id>Q03989</id>
        <label>ARID5A</label>
    </interactant>
    <organismsDiffer>false</organismsDiffer>
    <experiments>3</experiments>
</comment>
<comment type="interaction">
    <interactant intactId="EBI-1053424">
        <id>O43741</id>
    </interactant>
    <interactant intactId="EBI-10693257">
        <id>Q9H7T9</id>
        <label>AUNIP</label>
    </interactant>
    <organismsDiffer>false</organismsDiffer>
    <experiments>3</experiments>
</comment>
<comment type="interaction">
    <interactant intactId="EBI-1053424">
        <id>O43741</id>
    </interactant>
    <interactant intactId="EBI-6858021">
        <id>P01185</id>
        <label>AVP</label>
    </interactant>
    <organismsDiffer>false</organismsDiffer>
    <experiments>3</experiments>
</comment>
<comment type="interaction">
    <interactant intactId="EBI-1053424">
        <id>O43741</id>
    </interactant>
    <interactant intactId="EBI-744695">
        <id>Q8N9N5</id>
        <label>BANP</label>
    </interactant>
    <organismsDiffer>false</organismsDiffer>
    <experiments>3</experiments>
</comment>
<comment type="interaction">
    <interactant intactId="EBI-1053424">
        <id>O43741</id>
    </interactant>
    <interactant intactId="EBI-11524452">
        <id>Q8N9N5-2</id>
        <label>BANP</label>
    </interactant>
    <organismsDiffer>false</organismsDiffer>
    <experiments>5</experiments>
</comment>
<comment type="interaction">
    <interactant intactId="EBI-1053424">
        <id>O43741</id>
    </interactant>
    <interactant intactId="EBI-724373">
        <id>Q7L4P6</id>
        <label>BEND5</label>
    </interactant>
    <organismsDiffer>false</organismsDiffer>
    <experiments>4</experiments>
</comment>
<comment type="interaction">
    <interactant intactId="EBI-1053424">
        <id>O43741</id>
    </interactant>
    <interactant intactId="EBI-2548012">
        <id>Q9H2G9</id>
        <label>BLZF1</label>
    </interactant>
    <organismsDiffer>false</organismsDiffer>
    <experiments>9</experiments>
</comment>
<comment type="interaction">
    <interactant intactId="EBI-1053424">
        <id>O43741</id>
    </interactant>
    <interactant intactId="EBI-2812028">
        <id>Q9NWW7</id>
        <label>C2orf42</label>
    </interactant>
    <organismsDiffer>false</organismsDiffer>
    <experiments>3</experiments>
</comment>
<comment type="interaction">
    <interactant intactId="EBI-1053424">
        <id>O43741</id>
    </interactant>
    <interactant intactId="EBI-18036948">
        <id>Q3SXR2</id>
        <label>C3orf36</label>
    </interactant>
    <organismsDiffer>false</organismsDiffer>
    <experiments>3</experiments>
</comment>
<comment type="interaction">
    <interactant intactId="EBI-1053424">
        <id>O43741</id>
    </interactant>
    <interactant intactId="EBI-520342">
        <id>P42575</id>
        <label>CASP2</label>
    </interactant>
    <organismsDiffer>false</organismsDiffer>
    <experiments>3</experiments>
</comment>
<comment type="interaction">
    <interactant intactId="EBI-1053424">
        <id>O43741</id>
    </interactant>
    <interactant intactId="EBI-12920646">
        <id>Q9BUN5-3</id>
        <label>CCDC28B</label>
    </interactant>
    <organismsDiffer>false</organismsDiffer>
    <experiments>5</experiments>
</comment>
<comment type="interaction">
    <interactant intactId="EBI-1053424">
        <id>O43741</id>
    </interactant>
    <interactant intactId="EBI-970231">
        <id>O60729</id>
        <label>CDC14B</label>
    </interactant>
    <organismsDiffer>false</organismsDiffer>
    <experiments>3</experiments>
</comment>
<comment type="interaction">
    <interactant intactId="EBI-1053424">
        <id>O43741</id>
    </interactant>
    <interactant intactId="EBI-10181162">
        <id>O14627</id>
        <label>CDX4</label>
    </interactant>
    <organismsDiffer>false</organismsDiffer>
    <experiments>5</experiments>
</comment>
<comment type="interaction">
    <interactant intactId="EBI-1053424">
        <id>O43741</id>
    </interactant>
    <interactant intactId="EBI-718615">
        <id>Q9H5F2</id>
        <label>CFAP68</label>
    </interactant>
    <organismsDiffer>false</organismsDiffer>
    <experiments>3</experiments>
</comment>
<comment type="interaction">
    <interactant intactId="EBI-1053424">
        <id>O43741</id>
    </interactant>
    <interactant intactId="EBI-9038570">
        <id>P27918</id>
        <label>CFP</label>
    </interactant>
    <organismsDiffer>false</organismsDiffer>
    <experiments>3</experiments>
</comment>
<comment type="interaction">
    <interactant intactId="EBI-1053424">
        <id>O43741</id>
    </interactant>
    <interactant intactId="EBI-6942903">
        <id>Q96BA8</id>
        <label>CREB3L1</label>
    </interactant>
    <organismsDiffer>false</organismsDiffer>
    <experiments>4</experiments>
</comment>
<comment type="interaction">
    <interactant intactId="EBI-1053424">
        <id>O43741</id>
    </interactant>
    <interactant intactId="EBI-748171">
        <id>O43186</id>
        <label>CRX</label>
    </interactant>
    <organismsDiffer>false</organismsDiffer>
    <experiments>9</experiments>
</comment>
<comment type="interaction">
    <interactant intactId="EBI-1053424">
        <id>O43741</id>
    </interactant>
    <interactant intactId="EBI-3867333">
        <id>A8MQ03</id>
        <label>CYSRT1</label>
    </interactant>
    <organismsDiffer>false</organismsDiffer>
    <experiments>4</experiments>
</comment>
<comment type="interaction">
    <interactant intactId="EBI-1053424">
        <id>O43741</id>
    </interactant>
    <interactant intactId="EBI-3908043">
        <id>P14920</id>
        <label>DAO</label>
    </interactant>
    <organismsDiffer>false</organismsDiffer>
    <experiments>6</experiments>
</comment>
<comment type="interaction">
    <interactant intactId="EBI-1053424">
        <id>O43741</id>
    </interactant>
    <interactant intactId="EBI-749139">
        <id>O95865</id>
        <label>DDAH2</label>
    </interactant>
    <organismsDiffer>false</organismsDiffer>
    <experiments>3</experiments>
</comment>
<comment type="interaction">
    <interactant intactId="EBI-1053424">
        <id>O43741</id>
    </interactant>
    <interactant intactId="EBI-742054">
        <id>Q96D03</id>
        <label>DDIT4L</label>
    </interactant>
    <organismsDiffer>false</organismsDiffer>
    <experiments>3</experiments>
</comment>
<comment type="interaction">
    <interactant intactId="EBI-1053424">
        <id>O43741</id>
    </interactant>
    <interactant intactId="EBI-10976677">
        <id>G5E9A7</id>
        <label>DMWD</label>
    </interactant>
    <organismsDiffer>false</organismsDiffer>
    <experiments>3</experiments>
</comment>
<comment type="interaction">
    <interactant intactId="EBI-1053424">
        <id>O43741</id>
    </interactant>
    <interactant intactId="EBI-10694655">
        <id>Q7L591-3</id>
        <label>DOK3</label>
    </interactant>
    <organismsDiffer>false</organismsDiffer>
    <experiments>3</experiments>
</comment>
<comment type="interaction">
    <interactant intactId="EBI-1053424">
        <id>O43741</id>
    </interactant>
    <interactant intactId="EBI-395274">
        <id>O00472</id>
        <label>ELL2</label>
    </interactant>
    <organismsDiffer>false</organismsDiffer>
    <experiments>3</experiments>
</comment>
<comment type="interaction">
    <interactant intactId="EBI-1053424">
        <id>O43741</id>
    </interactant>
    <interactant intactId="EBI-12260294">
        <id>Q9NQ30</id>
        <label>ESM1</label>
    </interactant>
    <organismsDiffer>false</organismsDiffer>
    <experiments>3</experiments>
</comment>
<comment type="interaction">
    <interactant intactId="EBI-1053424">
        <id>O43741</id>
    </interactant>
    <interactant intactId="EBI-348399">
        <id>P22607</id>
        <label>FGFR3</label>
    </interactant>
    <organismsDiffer>false</organismsDiffer>
    <experiments>3</experiments>
</comment>
<comment type="interaction">
    <interactant intactId="EBI-1053424">
        <id>O43741</id>
    </interactant>
    <interactant intactId="EBI-9641086">
        <id>P21333-2</id>
        <label>FLNA</label>
    </interactant>
    <organismsDiffer>false</organismsDiffer>
    <experiments>3</experiments>
</comment>
<comment type="interaction">
    <interactant intactId="EBI-1053424">
        <id>O43741</id>
    </interactant>
    <interactant intactId="EBI-3909284">
        <id>P15976</id>
        <label>GATA1</label>
    </interactant>
    <organismsDiffer>false</organismsDiffer>
    <experiments>3</experiments>
</comment>
<comment type="interaction">
    <interactant intactId="EBI-1053424">
        <id>O43741</id>
    </interactant>
    <interactant intactId="EBI-9090198">
        <id>P15976-2</id>
        <label>GATA1</label>
    </interactant>
    <organismsDiffer>false</organismsDiffer>
    <experiments>6</experiments>
</comment>
<comment type="interaction">
    <interactant intactId="EBI-1053424">
        <id>O43741</id>
    </interactant>
    <interactant intactId="EBI-923440">
        <id>Q8WXI9</id>
        <label>GATAD2B</label>
    </interactant>
    <organismsDiffer>false</organismsDiffer>
    <experiments>4</experiments>
</comment>
<comment type="interaction">
    <interactant intactId="EBI-1053424">
        <id>O43741</id>
    </interactant>
    <interactant intactId="EBI-17857617">
        <id>Q5JQS6</id>
        <label>GCSAML</label>
    </interactant>
    <organismsDiffer>false</organismsDiffer>
    <experiments>3</experiments>
</comment>
<comment type="interaction">
    <interactant intactId="EBI-1053424">
        <id>O43741</id>
    </interactant>
    <interactant intactId="EBI-711823">
        <id>Q7L5D6</id>
        <label>GET4</label>
    </interactant>
    <organismsDiffer>false</organismsDiffer>
    <experiments>8</experiments>
</comment>
<comment type="interaction">
    <interactant intactId="EBI-1053424">
        <id>O43741</id>
    </interactant>
    <interactant intactId="EBI-618309">
        <id>Q08379</id>
        <label>GOLGA2</label>
    </interactant>
    <organismsDiffer>false</organismsDiffer>
    <experiments>10</experiments>
</comment>
<comment type="interaction">
    <interactant intactId="EBI-1053424">
        <id>O43741</id>
    </interactant>
    <interactant intactId="EBI-5916454">
        <id>A6NEM1</id>
        <label>GOLGA6L9</label>
    </interactant>
    <organismsDiffer>false</organismsDiffer>
    <experiments>3</experiments>
</comment>
<comment type="interaction">
    <interactant intactId="EBI-1053424">
        <id>O43741</id>
    </interactant>
    <interactant intactId="EBI-739467">
        <id>Q9H8Y8</id>
        <label>GORASP2</label>
    </interactant>
    <organismsDiffer>false</organismsDiffer>
    <experiments>3</experiments>
</comment>
<comment type="interaction">
    <interactant intactId="EBI-1053424">
        <id>O43741</id>
    </interactant>
    <interactant intactId="EBI-11519926">
        <id>Q6PI77</id>
        <label>GPRASP3</label>
    </interactant>
    <organismsDiffer>false</organismsDiffer>
    <experiments>3</experiments>
</comment>
<comment type="interaction">
    <interactant intactId="EBI-1053424">
        <id>O43741</id>
    </interactant>
    <interactant intactId="EBI-18300553">
        <id>Q8TC17</id>
        <label>GRAPL</label>
    </interactant>
    <organismsDiffer>false</organismsDiffer>
    <experiments>3</experiments>
</comment>
<comment type="interaction">
    <interactant intactId="EBI-1053424">
        <id>O43741</id>
    </interactant>
    <interactant intactId="EBI-8285963">
        <id>Q14957</id>
        <label>GRIN2C</label>
    </interactant>
    <organismsDiffer>false</organismsDiffer>
    <experiments>3</experiments>
</comment>
<comment type="interaction">
    <interactant intactId="EBI-1053424">
        <id>O43741</id>
    </interactant>
    <interactant intactId="EBI-747754">
        <id>P28799</id>
        <label>GRN</label>
    </interactant>
    <organismsDiffer>false</organismsDiffer>
    <experiments>4</experiments>
</comment>
<comment type="interaction">
    <interactant intactId="EBI-1053424">
        <id>O43741</id>
    </interactant>
    <interactant intactId="EBI-19954058">
        <id>O15499</id>
        <label>GSC2</label>
    </interactant>
    <organismsDiffer>false</organismsDiffer>
    <experiments>3</experiments>
</comment>
<comment type="interaction">
    <interactant intactId="EBI-1053424">
        <id>O43741</id>
    </interactant>
    <interactant intactId="EBI-351506">
        <id>P06396</id>
        <label>GSN</label>
    </interactant>
    <organismsDiffer>false</organismsDiffer>
    <experiments>3</experiments>
</comment>
<comment type="interaction">
    <interactant intactId="EBI-1053424">
        <id>O43741</id>
    </interactant>
    <interactant intactId="EBI-352682">
        <id>P04792</id>
        <label>HSPB1</label>
    </interactant>
    <organismsDiffer>false</organismsDiffer>
    <experiments>3</experiments>
</comment>
<comment type="interaction">
    <interactant intactId="EBI-1053424">
        <id>O43741</id>
    </interactant>
    <interactant intactId="EBI-8638439">
        <id>Q8IYA8</id>
        <label>IHO1</label>
    </interactant>
    <organismsDiffer>false</organismsDiffer>
    <experiments>6</experiments>
</comment>
<comment type="interaction">
    <interactant intactId="EBI-1053424">
        <id>O43741</id>
    </interactant>
    <interactant intactId="EBI-745305">
        <id>Q13422</id>
        <label>IKZF1</label>
    </interactant>
    <organismsDiffer>false</organismsDiffer>
    <experiments>3</experiments>
</comment>
<comment type="interaction">
    <interactant intactId="EBI-1053424">
        <id>O43741</id>
    </interactant>
    <interactant intactId="EBI-747204">
        <id>Q9UKT9</id>
        <label>IKZF3</label>
    </interactant>
    <organismsDiffer>false</organismsDiffer>
    <experiments>11</experiments>
</comment>
<comment type="interaction">
    <interactant intactId="EBI-1053424">
        <id>O43741</id>
    </interactant>
    <interactant intactId="EBI-3862125">
        <id>Q9NZH6</id>
        <label>IL37</label>
    </interactant>
    <organismsDiffer>false</organismsDiffer>
    <experiments>5</experiments>
</comment>
<comment type="interaction">
    <interactant intactId="EBI-1053424">
        <id>O43741</id>
    </interactant>
    <interactant intactId="EBI-9658404">
        <id>Q5VVH5</id>
        <label>IRAK1BP1</label>
    </interactant>
    <organismsDiffer>false</organismsDiffer>
    <experiments>3</experiments>
</comment>
<comment type="interaction">
    <interactant intactId="EBI-1053424">
        <id>O43741</id>
    </interactant>
    <interactant intactId="EBI-715394">
        <id>Q9H079</id>
        <label>KATNBL1</label>
    </interactant>
    <organismsDiffer>false</organismsDiffer>
    <experiments>3</experiments>
</comment>
<comment type="interaction">
    <interactant intactId="EBI-1053424">
        <id>O43741</id>
    </interactant>
    <interactant intactId="EBI-9089060">
        <id>Q7Z7F0-4</id>
        <label>KHDC4</label>
    </interactant>
    <organismsDiffer>false</organismsDiffer>
    <experiments>3</experiments>
</comment>
<comment type="interaction">
    <interactant intactId="EBI-1053424">
        <id>O43741</id>
    </interactant>
    <interactant intactId="EBI-10975473">
        <id>O60333-2</id>
        <label>KIF1B</label>
    </interactant>
    <organismsDiffer>false</organismsDiffer>
    <experiments>3</experiments>
</comment>
<comment type="interaction">
    <interactant intactId="EBI-1053424">
        <id>O43741</id>
    </interactant>
    <interactant intactId="EBI-2796400">
        <id>Q9UIH9</id>
        <label>KLF15</label>
    </interactant>
    <organismsDiffer>false</organismsDiffer>
    <experiments>9</experiments>
</comment>
<comment type="interaction">
    <interactant intactId="EBI-1053424">
        <id>O43741</id>
    </interactant>
    <interactant intactId="EBI-12893625">
        <id>Q5JUW0-3</id>
        <label>KRBOX4</label>
    </interactant>
    <organismsDiffer>false</organismsDiffer>
    <experiments>3</experiments>
</comment>
<comment type="interaction">
    <interactant intactId="EBI-1053424">
        <id>O43741</id>
    </interactant>
    <interactant intactId="EBI-948001">
        <id>Q15323</id>
        <label>KRT31</label>
    </interactant>
    <organismsDiffer>false</organismsDiffer>
    <experiments>3</experiments>
</comment>
<comment type="interaction">
    <interactant intactId="EBI-1053424">
        <id>O43741</id>
    </interactant>
    <interactant intactId="EBI-10171697">
        <id>Q6A162</id>
        <label>KRT40</label>
    </interactant>
    <organismsDiffer>false</organismsDiffer>
    <experiments>6</experiments>
</comment>
<comment type="interaction">
    <interactant intactId="EBI-1053424">
        <id>O43741</id>
    </interactant>
    <interactant intactId="EBI-11959885">
        <id>Q07627</id>
        <label>KRTAP1-1</label>
    </interactant>
    <organismsDiffer>false</organismsDiffer>
    <experiments>3</experiments>
</comment>
<comment type="interaction">
    <interactant intactId="EBI-1053424">
        <id>O43741</id>
    </interactant>
    <interactant intactId="EBI-11749135">
        <id>Q8IUG1</id>
        <label>KRTAP1-3</label>
    </interactant>
    <organismsDiffer>false</organismsDiffer>
    <experiments>5</experiments>
</comment>
<comment type="interaction">
    <interactant intactId="EBI-1053424">
        <id>O43741</id>
    </interactant>
    <interactant intactId="EBI-10217483">
        <id>P60412</id>
        <label>KRTAP10-11</label>
    </interactant>
    <organismsDiffer>false</organismsDiffer>
    <experiments>3</experiments>
</comment>
<comment type="interaction">
    <interactant intactId="EBI-1053424">
        <id>O43741</id>
    </interactant>
    <interactant intactId="EBI-10172150">
        <id>P60370</id>
        <label>KRTAP10-5</label>
    </interactant>
    <organismsDiffer>false</organismsDiffer>
    <experiments>3</experiments>
</comment>
<comment type="interaction">
    <interactant intactId="EBI-1053424">
        <id>O43741</id>
    </interactant>
    <interactant intactId="EBI-10172290">
        <id>P60409</id>
        <label>KRTAP10-7</label>
    </interactant>
    <organismsDiffer>false</organismsDiffer>
    <experiments>8</experiments>
</comment>
<comment type="interaction">
    <interactant intactId="EBI-1053424">
        <id>O43741</id>
    </interactant>
    <interactant intactId="EBI-10171774">
        <id>P60410</id>
        <label>KRTAP10-8</label>
    </interactant>
    <organismsDiffer>false</organismsDiffer>
    <experiments>6</experiments>
</comment>
<comment type="interaction">
    <interactant intactId="EBI-1053424">
        <id>O43741</id>
    </interactant>
    <interactant intactId="EBI-10172052">
        <id>P60411</id>
        <label>KRTAP10-9</label>
    </interactant>
    <organismsDiffer>false</organismsDiffer>
    <experiments>6</experiments>
</comment>
<comment type="interaction">
    <interactant intactId="EBI-1053424">
        <id>O43741</id>
    </interactant>
    <interactant intactId="EBI-11988175">
        <id>Q9BYP8</id>
        <label>KRTAP17-1</label>
    </interactant>
    <organismsDiffer>false</organismsDiffer>
    <experiments>3</experiments>
</comment>
<comment type="interaction">
    <interactant intactId="EBI-1053424">
        <id>O43741</id>
    </interactant>
    <interactant intactId="EBI-14065470">
        <id>Q9BYR9</id>
        <label>KRTAP2-4</label>
    </interactant>
    <organismsDiffer>false</organismsDiffer>
    <experiments>3</experiments>
</comment>
<comment type="interaction">
    <interactant intactId="EBI-1053424">
        <id>O43741</id>
    </interactant>
    <interactant intactId="EBI-3957694">
        <id>Q9BYR6</id>
        <label>KRTAP3-3</label>
    </interactant>
    <organismsDiffer>false</organismsDiffer>
    <experiments>3</experiments>
</comment>
<comment type="interaction">
    <interactant intactId="EBI-1053424">
        <id>O43741</id>
    </interactant>
    <interactant intactId="EBI-739863">
        <id>Q9BQ66</id>
        <label>KRTAP4-12</label>
    </interactant>
    <organismsDiffer>false</organismsDiffer>
    <experiments>3</experiments>
</comment>
<comment type="interaction">
    <interactant intactId="EBI-1053424">
        <id>O43741</id>
    </interactant>
    <interactant intactId="EBI-10172511">
        <id>Q9BYR5</id>
        <label>KRTAP4-2</label>
    </interactant>
    <organismsDiffer>false</organismsDiffer>
    <experiments>3</experiments>
</comment>
<comment type="interaction">
    <interactant intactId="EBI-1053424">
        <id>O43741</id>
    </interactant>
    <interactant intactId="EBI-11993254">
        <id>Q9BYR2</id>
        <label>KRTAP4-5</label>
    </interactant>
    <organismsDiffer>false</organismsDiffer>
    <experiments>3</experiments>
</comment>
<comment type="interaction">
    <interactant intactId="EBI-1053424">
        <id>O43741</id>
    </interactant>
    <interactant intactId="EBI-3958099">
        <id>P26371</id>
        <label>KRTAP5-9</label>
    </interactant>
    <organismsDiffer>false</organismsDiffer>
    <experiments>6</experiments>
</comment>
<comment type="interaction">
    <interactant intactId="EBI-1053424">
        <id>O43741</id>
    </interactant>
    <interactant intactId="EBI-1044640">
        <id>Q9BYQ4</id>
        <label>KRTAP9-2</label>
    </interactant>
    <organismsDiffer>false</organismsDiffer>
    <experiments>8</experiments>
</comment>
<comment type="interaction">
    <interactant intactId="EBI-1053424">
        <id>O43741</id>
    </interactant>
    <interactant intactId="EBI-1043191">
        <id>Q9BYQ3</id>
        <label>KRTAP9-3</label>
    </interactant>
    <organismsDiffer>false</organismsDiffer>
    <experiments>3</experiments>
</comment>
<comment type="interaction">
    <interactant intactId="EBI-1053424">
        <id>O43741</id>
    </interactant>
    <interactant intactId="EBI-10185730">
        <id>Q9BYQ2</id>
        <label>KRTAP9-4</label>
    </interactant>
    <organismsDiffer>false</organismsDiffer>
    <experiments>3</experiments>
</comment>
<comment type="interaction">
    <interactant intactId="EBI-1053424">
        <id>O43741</id>
    </interactant>
    <interactant intactId="EBI-11958364">
        <id>Q9BYQ0</id>
        <label>KRTAP9-8</label>
    </interactant>
    <organismsDiffer>false</organismsDiffer>
    <experiments>8</experiments>
</comment>
<comment type="interaction">
    <interactant intactId="EBI-1053424">
        <id>O43741</id>
    </interactant>
    <interactant intactId="EBI-12039345">
        <id>Q9UBR4-2</id>
        <label>LHX3</label>
    </interactant>
    <organismsDiffer>false</organismsDiffer>
    <experiments>3</experiments>
</comment>
<comment type="interaction">
    <interactant intactId="EBI-1053424">
        <id>O43741</id>
    </interactant>
    <interactant intactId="EBI-473196">
        <id>Q5T3J3</id>
        <label>LRIF1</label>
    </interactant>
    <organismsDiffer>false</organismsDiffer>
    <experiments>3</experiments>
</comment>
<comment type="interaction">
    <interactant intactId="EBI-1053424">
        <id>O43741</id>
    </interactant>
    <interactant intactId="EBI-1216080">
        <id>Q9Y250</id>
        <label>LZTS1</label>
    </interactant>
    <organismsDiffer>false</organismsDiffer>
    <experiments>3</experiments>
</comment>
<comment type="interaction">
    <interactant intactId="EBI-1053424">
        <id>O43741</id>
    </interactant>
    <interactant intactId="EBI-741037">
        <id>Q9BRK4</id>
        <label>LZTS2</label>
    </interactant>
    <organismsDiffer>false</organismsDiffer>
    <experiments>4</experiments>
</comment>
<comment type="interaction">
    <interactant intactId="EBI-1053424">
        <id>O43741</id>
    </interactant>
    <interactant intactId="EBI-716006">
        <id>Q9Y5V3</id>
        <label>MAGED1</label>
    </interactant>
    <organismsDiffer>false</organismsDiffer>
    <experiments>4</experiments>
</comment>
<comment type="interaction">
    <interactant intactId="EBI-1053424">
        <id>O43741</id>
    </interactant>
    <interactant intactId="EBI-18015780">
        <id>Q3KP22-3</id>
        <label>MAJIN</label>
    </interactant>
    <organismsDiffer>false</organismsDiffer>
    <experiments>3</experiments>
</comment>
<comment type="interaction">
    <interactant intactId="EBI-1053424">
        <id>O43741</id>
    </interactant>
    <interactant intactId="EBI-1050743">
        <id>P31153</id>
        <label>MAT2A</label>
    </interactant>
    <organismsDiffer>false</organismsDiffer>
    <experiments>3</experiments>
</comment>
<comment type="interaction">
    <interactant intactId="EBI-1053424">
        <id>O43741</id>
    </interactant>
    <interactant intactId="EBI-724076">
        <id>Q99750</id>
        <label>MDFI</label>
    </interactant>
    <organismsDiffer>false</organismsDiffer>
    <experiments>12</experiments>
</comment>
<comment type="interaction">
    <interactant intactId="EBI-1053424">
        <id>O43741</id>
    </interactant>
    <interactant intactId="EBI-748397">
        <id>P50222</id>
        <label>MEOX2</label>
    </interactant>
    <organismsDiffer>false</organismsDiffer>
    <experiments>3</experiments>
</comment>
<comment type="interaction">
    <interactant intactId="EBI-1053424">
        <id>O43741</id>
    </interactant>
    <interactant intactId="EBI-8487781">
        <id>Q8N6F8</id>
        <label>METTL27</label>
    </interactant>
    <organismsDiffer>false</organismsDiffer>
    <experiments>3</experiments>
</comment>
<comment type="interaction">
    <interactant intactId="EBI-1053424">
        <id>O43741</id>
    </interactant>
    <interactant intactId="EBI-9675802">
        <id>Q6PF18</id>
        <label>MORN3</label>
    </interactant>
    <organismsDiffer>false</organismsDiffer>
    <experiments>3</experiments>
</comment>
<comment type="interaction">
    <interactant intactId="EBI-1053424">
        <id>O43741</id>
    </interactant>
    <interactant intactId="EBI-8641936">
        <id>Q15742</id>
        <label>NAB2</label>
    </interactant>
    <organismsDiffer>false</organismsDiffer>
    <experiments>3</experiments>
</comment>
<comment type="interaction">
    <interactant intactId="EBI-1053424">
        <id>O43741</id>
    </interactant>
    <interactant intactId="EBI-12868744">
        <id>P0CG21</id>
        <label>NHLRC4</label>
    </interactant>
    <organismsDiffer>false</organismsDiffer>
    <experiments>3</experiments>
</comment>
<comment type="interaction">
    <interactant intactId="EBI-1053424">
        <id>O43741</id>
    </interactant>
    <interactant intactId="EBI-12813389">
        <id>Q8TDS5</id>
        <label>OXER1</label>
    </interactant>
    <organismsDiffer>false</organismsDiffer>
    <experiments>3</experiments>
</comment>
<comment type="interaction">
    <interactant intactId="EBI-1053424">
        <id>O43741</id>
    </interactant>
    <interactant intactId="EBI-2622029">
        <id>P18545</id>
        <label>PDE6G</label>
    </interactant>
    <organismsDiffer>false</organismsDiffer>
    <experiments>3</experiments>
</comment>
<comment type="interaction">
    <interactant intactId="EBI-1053424">
        <id>O43741</id>
    </interactant>
    <interactant intactId="EBI-10231995">
        <id>Q13956</id>
        <label>PDE6H</label>
    </interactant>
    <organismsDiffer>false</organismsDiffer>
    <experiments>3</experiments>
</comment>
<comment type="interaction">
    <interactant intactId="EBI-1053424">
        <id>O43741</id>
    </interactant>
    <interactant intactId="EBI-357275">
        <id>Q99471</id>
        <label>PFDN5</label>
    </interactant>
    <organismsDiffer>false</organismsDiffer>
    <experiments>3</experiments>
</comment>
<comment type="interaction">
    <interactant intactId="EBI-1053424">
        <id>O43741</id>
    </interactant>
    <interactant intactId="EBI-348555">
        <id>O75928</id>
        <label>PIAS2</label>
    </interactant>
    <organismsDiffer>false</organismsDiffer>
    <experiments>3</experiments>
</comment>
<comment type="interaction">
    <interactant intactId="EBI-1053424">
        <id>O43741</id>
    </interactant>
    <interactant intactId="EBI-12891828">
        <id>Q6ZR37</id>
        <label>PLEKHG7</label>
    </interactant>
    <organismsDiffer>false</organismsDiffer>
    <experiments>3</experiments>
</comment>
<comment type="interaction">
    <interactant intactId="EBI-1053424">
        <id>O43741</id>
    </interactant>
    <interactant intactId="EBI-1105153">
        <id>Q96KQ4</id>
        <label>PPP1R13B</label>
    </interactant>
    <organismsDiffer>false</organismsDiffer>
    <experiments>3</experiments>
</comment>
<comment type="interaction">
    <interactant intactId="EBI-1053424">
        <id>O43741</id>
    </interactant>
    <interactant intactId="EBI-710402">
        <id>Q96I34</id>
        <label>PPP1R16A</label>
    </interactant>
    <organismsDiffer>false</organismsDiffer>
    <experiments>3</experiments>
</comment>
<comment type="interaction">
    <interactant intactId="EBI-1053424">
        <id>O43741</id>
    </interactant>
    <interactant intactId="EBI-3957793">
        <id>Q9GZV8</id>
        <label>PRDM14</label>
    </interactant>
    <organismsDiffer>false</organismsDiffer>
    <experiments>4</experiments>
</comment>
<comment type="interaction">
    <interactant intactId="EBI-1053424">
        <id>O43741</id>
    </interactant>
    <interactant intactId="EBI-1181405">
        <id>Q13131</id>
        <label>PRKAA1</label>
    </interactant>
    <organismsDiffer>false</organismsDiffer>
    <experiments>20</experiments>
</comment>
<comment type="interaction">
    <interactant intactId="EBI-1053424">
        <id>O43741</id>
    </interactant>
    <interactant intactId="EBI-1383852">
        <id>P54646</id>
        <label>PRKAA2</label>
    </interactant>
    <organismsDiffer>false</organismsDiffer>
    <experiments>17</experiments>
</comment>
<comment type="interaction">
    <interactant intactId="EBI-1053424">
        <id>O43741</id>
    </interactant>
    <interactant intactId="EBI-1181439">
        <id>P54619</id>
        <label>PRKAG1</label>
    </interactant>
    <organismsDiffer>false</organismsDiffer>
    <experiments>20</experiments>
</comment>
<comment type="interaction">
    <interactant intactId="EBI-1053424">
        <id>O43741</id>
    </interactant>
    <interactant intactId="EBI-7428853">
        <id>Q9UGI9</id>
        <label>PRKAG3</label>
    </interactant>
    <organismsDiffer>false</organismsDiffer>
    <experiments>7</experiments>
</comment>
<comment type="interaction">
    <interactant intactId="EBI-1053424">
        <id>O43741</id>
    </interactant>
    <interactant intactId="EBI-357816">
        <id>O00231</id>
        <label>PSMD11</label>
    </interactant>
    <organismsDiffer>false</organismsDiffer>
    <experiments>3</experiments>
</comment>
<comment type="interaction">
    <interactant intactId="EBI-1053424">
        <id>O43741</id>
    </interactant>
    <interactant intactId="EBI-355546">
        <id>P61289</id>
        <label>PSME3</label>
    </interactant>
    <organismsDiffer>false</organismsDiffer>
    <experiments>9</experiments>
</comment>
<comment type="interaction">
    <interactant intactId="EBI-1053424">
        <id>O43741</id>
    </interactant>
    <interactant intactId="EBI-357469">
        <id>P11217</id>
        <label>PYGM</label>
    </interactant>
    <organismsDiffer>false</organismsDiffer>
    <experiments>7</experiments>
</comment>
<comment type="interaction">
    <interactant intactId="EBI-1053424">
        <id>O43741</id>
    </interactant>
    <interactant intactId="EBI-945792">
        <id>Q96PU8</id>
        <label>QKI</label>
    </interactant>
    <organismsDiffer>false</organismsDiffer>
    <experiments>3</experiments>
</comment>
<comment type="interaction">
    <interactant intactId="EBI-1053424">
        <id>O43741</id>
    </interactant>
    <interactant intactId="EBI-11984839">
        <id>Q96QF0-7</id>
        <label>RAB3IP</label>
    </interactant>
    <organismsDiffer>false</organismsDiffer>
    <experiments>3</experiments>
</comment>
<comment type="interaction">
    <interactant intactId="EBI-1053424">
        <id>O43741</id>
    </interactant>
    <interactant intactId="EBI-473821">
        <id>Q5RL73</id>
        <label>RBM48</label>
    </interactant>
    <organismsDiffer>false</organismsDiffer>
    <experiments>3</experiments>
</comment>
<comment type="interaction">
    <interactant intactId="EBI-1053424">
        <id>O43741</id>
    </interactant>
    <interactant intactId="EBI-740343">
        <id>Q93062-3</id>
        <label>RBPMS</label>
    </interactant>
    <organismsDiffer>false</organismsDiffer>
    <experiments>3</experiments>
</comment>
<comment type="interaction">
    <interactant intactId="EBI-1053424">
        <id>O43741</id>
    </interactant>
    <interactant intactId="EBI-10829018">
        <id>Q04864-2</id>
        <label>REL</label>
    </interactant>
    <organismsDiffer>false</organismsDiffer>
    <experiments>4</experiments>
</comment>
<comment type="interaction">
    <interactant intactId="EBI-1053424">
        <id>O43741</id>
    </interactant>
    <interactant intactId="EBI-746555">
        <id>Q8TAI7</id>
        <label>RHEBL1</label>
    </interactant>
    <organismsDiffer>false</organismsDiffer>
    <experiments>7</experiments>
</comment>
<comment type="interaction">
    <interactant intactId="EBI-1053424">
        <id>O43741</id>
    </interactant>
    <interactant intactId="EBI-10182375">
        <id>Q9UFD9</id>
        <label>RIMBP3</label>
    </interactant>
    <organismsDiffer>false</organismsDiffer>
    <experiments>4</experiments>
</comment>
<comment type="interaction">
    <interactant intactId="EBI-1053424">
        <id>O43741</id>
    </interactant>
    <interactant intactId="EBI-396669">
        <id>Q9Y3C5</id>
        <label>RNF11</label>
    </interactant>
    <organismsDiffer>false</organismsDiffer>
    <experiments>3</experiments>
</comment>
<comment type="interaction">
    <interactant intactId="EBI-1053424">
        <id>O43741</id>
    </interactant>
    <interactant intactId="EBI-6422642">
        <id>Q01974</id>
        <label>ROR2</label>
    </interactant>
    <organismsDiffer>false</organismsDiffer>
    <experiments>3</experiments>
</comment>
<comment type="interaction">
    <interactant intactId="EBI-1053424">
        <id>O43741</id>
    </interactant>
    <interactant intactId="EBI-2855824">
        <id>Q9UNE2</id>
        <label>RPH3AL</label>
    </interactant>
    <organismsDiffer>false</organismsDiffer>
    <experiments>3</experiments>
</comment>
<comment type="interaction">
    <interactant intactId="EBI-1053424">
        <id>O43741</id>
    </interactant>
    <interactant intactId="EBI-11986417">
        <id>Q9UPU9-3</id>
        <label>SAMD4A</label>
    </interactant>
    <organismsDiffer>false</organismsDiffer>
    <experiments>3</experiments>
</comment>
<comment type="interaction">
    <interactant intactId="EBI-1053424">
        <id>O43741</id>
    </interactant>
    <interactant intactId="EBI-2822051">
        <id>Q14140</id>
        <label>SERTAD2</label>
    </interactant>
    <organismsDiffer>false</organismsDiffer>
    <experiments>3</experiments>
</comment>
<comment type="interaction">
    <interactant intactId="EBI-1053424">
        <id>O43741</id>
    </interactant>
    <interactant intactId="EBI-358436">
        <id>Q12824-2</id>
        <label>SMARCB1</label>
    </interactant>
    <organismsDiffer>false</organismsDiffer>
    <experiments>3</experiments>
</comment>
<comment type="interaction">
    <interactant intactId="EBI-1053424">
        <id>O43741</id>
    </interactant>
    <interactant intactId="EBI-12275818">
        <id>Q53HV7-2</id>
        <label>SMUG1</label>
    </interactant>
    <organismsDiffer>false</organismsDiffer>
    <experiments>3</experiments>
</comment>
<comment type="interaction">
    <interactant intactId="EBI-1053424">
        <id>O43741</id>
    </interactant>
    <interactant intactId="EBI-5235340">
        <id>Q7Z699</id>
        <label>SPRED1</label>
    </interactant>
    <organismsDiffer>false</organismsDiffer>
    <experiments>3</experiments>
</comment>
<comment type="interaction">
    <interactant intactId="EBI-1053424">
        <id>O43741</id>
    </interactant>
    <interactant intactId="EBI-3866665">
        <id>O43609</id>
        <label>SPRY1</label>
    </interactant>
    <organismsDiffer>false</organismsDiffer>
    <experiments>3</experiments>
</comment>
<comment type="interaction">
    <interactant intactId="EBI-1053424">
        <id>O43741</id>
    </interactant>
    <interactant intactId="EBI-742487">
        <id>O43597</id>
        <label>SPRY2</label>
    </interactant>
    <organismsDiffer>false</organismsDiffer>
    <experiments>4</experiments>
</comment>
<comment type="interaction">
    <interactant intactId="EBI-1053424">
        <id>O43741</id>
    </interactant>
    <interactant intactId="EBI-714135">
        <id>O75558</id>
        <label>STX11</label>
    </interactant>
    <organismsDiffer>false</organismsDiffer>
    <experiments>4</experiments>
</comment>
<comment type="interaction">
    <interactant intactId="EBI-1053424">
        <id>O43741</id>
    </interactant>
    <interactant intactId="EBI-8484990">
        <id>Q8N4C7</id>
        <label>STX19</label>
    </interactant>
    <organismsDiffer>false</organismsDiffer>
    <experiments>4</experiments>
</comment>
<comment type="interaction">
    <interactant intactId="EBI-1053424">
        <id>O43741</id>
    </interactant>
    <interactant intactId="EBI-10172380">
        <id>Q5VWN6-2</id>
        <label>TASOR2</label>
    </interactant>
    <organismsDiffer>false</organismsDiffer>
    <experiments>3</experiments>
</comment>
<comment type="interaction">
    <interactant intactId="EBI-1053424">
        <id>O43741</id>
    </interactant>
    <interactant intactId="EBI-11952764">
        <id>Q99081-3</id>
        <label>TCF12</label>
    </interactant>
    <organismsDiffer>false</organismsDiffer>
    <experiments>3</experiments>
</comment>
<comment type="interaction">
    <interactant intactId="EBI-1053424">
        <id>O43741</id>
    </interactant>
    <interactant intactId="EBI-7413767">
        <id>Q9Y242</id>
        <label>TCF19</label>
    </interactant>
    <organismsDiffer>false</organismsDiffer>
    <experiments>3</experiments>
</comment>
<comment type="interaction">
    <interactant intactId="EBI-1053424">
        <id>O43741</id>
    </interactant>
    <interactant intactId="EBI-11746252">
        <id>Q9NQB0-10</id>
        <label>TCF7L2</label>
    </interactant>
    <organismsDiffer>false</organismsDiffer>
    <experiments>3</experiments>
</comment>
<comment type="interaction">
    <interactant intactId="EBI-1053424">
        <id>O43741</id>
    </interactant>
    <interactant intactId="EBI-12029034">
        <id>Q96PF1</id>
        <label>TGM7</label>
    </interactant>
    <organismsDiffer>false</organismsDiffer>
    <experiments>3</experiments>
</comment>
<comment type="interaction">
    <interactant intactId="EBI-1053424">
        <id>O43741</id>
    </interactant>
    <interactant intactId="EBI-11741437">
        <id>Q08117-2</id>
        <label>TLE5</label>
    </interactant>
    <organismsDiffer>false</organismsDiffer>
    <experiments>5</experiments>
</comment>
<comment type="interaction">
    <interactant intactId="EBI-1053424">
        <id>O43741</id>
    </interactant>
    <interactant intactId="EBI-746692">
        <id>P19237</id>
        <label>TNNI1</label>
    </interactant>
    <organismsDiffer>false</organismsDiffer>
    <experiments>3</experiments>
</comment>
<comment type="interaction">
    <interactant intactId="EBI-1053424">
        <id>O43741</id>
    </interactant>
    <interactant intactId="EBI-355744">
        <id>Q12933</id>
        <label>TRAF2</label>
    </interactant>
    <organismsDiffer>false</organismsDiffer>
    <experiments>8</experiments>
</comment>
<comment type="interaction">
    <interactant intactId="EBI-1053424">
        <id>O43741</id>
    </interactant>
    <interactant intactId="EBI-492476">
        <id>Q96RU7</id>
        <label>TRIB3</label>
    </interactant>
    <organismsDiffer>false</organismsDiffer>
    <experiments>3</experiments>
</comment>
<comment type="interaction">
    <interactant intactId="EBI-1053424">
        <id>O43741</id>
    </interactant>
    <interactant intactId="EBI-2820256">
        <id>Q14142</id>
        <label>TRIM14</label>
    </interactant>
    <organismsDiffer>false</organismsDiffer>
    <experiments>3</experiments>
</comment>
<comment type="interaction">
    <interactant intactId="EBI-1053424">
        <id>O43741</id>
    </interactant>
    <interactant intactId="EBI-17716262">
        <id>Q9UPQ4-2</id>
        <label>TRIM35</label>
    </interactant>
    <organismsDiffer>false</organismsDiffer>
    <experiments>3</experiments>
</comment>
<comment type="interaction">
    <interactant intactId="EBI-1053424">
        <id>O43741</id>
    </interactant>
    <interactant intactId="EBI-5235829">
        <id>Q8IWZ5</id>
        <label>TRIM42</label>
    </interactant>
    <organismsDiffer>false</organismsDiffer>
    <experiments>3</experiments>
</comment>
<comment type="interaction">
    <interactant intactId="EBI-1053424">
        <id>O43741</id>
    </interactant>
    <interactant intactId="EBI-2130429">
        <id>Q9BYV2</id>
        <label>TRIM54</label>
    </interactant>
    <organismsDiffer>false</organismsDiffer>
    <experiments>3</experiments>
</comment>
<comment type="interaction">
    <interactant intactId="EBI-1053424">
        <id>O43741</id>
    </interactant>
    <interactant intactId="EBI-746981">
        <id>Q969E8</id>
        <label>TSR2</label>
    </interactant>
    <organismsDiffer>false</organismsDiffer>
    <experiments>3</experiments>
</comment>
<comment type="interaction">
    <interactant intactId="EBI-1053424">
        <id>O43741</id>
    </interactant>
    <interactant intactId="EBI-9090990">
        <id>Q5W5X9-3</id>
        <label>TTC23</label>
    </interactant>
    <organismsDiffer>false</organismsDiffer>
    <experiments>3</experiments>
</comment>
<comment type="interaction">
    <interactant intactId="EBI-1053424">
        <id>O43741</id>
    </interactant>
    <interactant intactId="EBI-741480">
        <id>Q9UMX0</id>
        <label>UBQLN1</label>
    </interactant>
    <organismsDiffer>false</organismsDiffer>
    <experiments>3</experiments>
</comment>
<comment type="interaction">
    <interactant intactId="EBI-1053424">
        <id>O43741</id>
    </interactant>
    <interactant intactId="EBI-746004">
        <id>Q5T124</id>
        <label>UBXN11</label>
    </interactant>
    <organismsDiffer>false</organismsDiffer>
    <experiments>3</experiments>
</comment>
<comment type="interaction">
    <interactant intactId="EBI-1053424">
        <id>O43741</id>
    </interactant>
    <interactant intactId="EBI-11975223">
        <id>Q70EL1-9</id>
        <label>USP54</label>
    </interactant>
    <organismsDiffer>false</organismsDiffer>
    <experiments>3</experiments>
</comment>
<comment type="interaction">
    <interactant intactId="EBI-1053424">
        <id>O43741</id>
    </interactant>
    <interactant intactId="EBI-357430">
        <id>P61758</id>
        <label>VBP1</label>
    </interactant>
    <organismsDiffer>false</organismsDiffer>
    <experiments>3</experiments>
</comment>
<comment type="interaction">
    <interactant intactId="EBI-1053424">
        <id>O43741</id>
    </interactant>
    <interactant intactId="EBI-12146727">
        <id>Q9UK41-2</id>
        <label>VPS28</label>
    </interactant>
    <organismsDiffer>false</organismsDiffer>
    <experiments>3</experiments>
</comment>
<comment type="interaction">
    <interactant intactId="EBI-1053424">
        <id>O43741</id>
    </interactant>
    <interactant intactId="EBI-7705033">
        <id>Q9BRX9</id>
        <label>WDR83</label>
    </interactant>
    <organismsDiffer>false</organismsDiffer>
    <experiments>3</experiments>
</comment>
<comment type="interaction">
    <interactant intactId="EBI-1053424">
        <id>O43741</id>
    </interactant>
    <interactant intactId="EBI-14104088">
        <id>Q53FD0-2</id>
        <label>ZC2HC1C</label>
    </interactant>
    <organismsDiffer>false</organismsDiffer>
    <experiments>3</experiments>
</comment>
<comment type="interaction">
    <interactant intactId="EBI-1053424">
        <id>O43741</id>
    </interactant>
    <interactant intactId="EBI-11419867">
        <id>Q8TF47</id>
        <label>ZFP90</label>
    </interactant>
    <organismsDiffer>false</organismsDiffer>
    <experiments>3</experiments>
</comment>
<comment type="interaction">
    <interactant intactId="EBI-1053424">
        <id>O43741</id>
    </interactant>
    <interactant intactId="EBI-746595">
        <id>Q96E35</id>
        <label>ZMYND19</label>
    </interactant>
    <organismsDiffer>false</organismsDiffer>
    <experiments>5</experiments>
</comment>
<comment type="interaction">
    <interactant intactId="EBI-1053424">
        <id>O43741</id>
    </interactant>
    <interactant intactId="EBI-12272076">
        <id>Q13360-2</id>
        <label>ZNF177</label>
    </interactant>
    <organismsDiffer>false</organismsDiffer>
    <experiments>3</experiments>
</comment>
<comment type="interaction">
    <interactant intactId="EBI-1053424">
        <id>O43741</id>
    </interactant>
    <interactant intactId="EBI-23928087">
        <id>Q9UL36</id>
        <label>ZNF236</label>
    </interactant>
    <organismsDiffer>false</organismsDiffer>
    <experiments>3</experiments>
</comment>
<comment type="interaction">
    <interactant intactId="EBI-1053424">
        <id>O43741</id>
    </interactant>
    <interactant intactId="EBI-17269964">
        <id>Q6S9Z5</id>
        <label>ZNF474</label>
    </interactant>
    <organismsDiffer>false</organismsDiffer>
    <experiments>3</experiments>
</comment>
<comment type="interaction">
    <interactant intactId="EBI-1053424">
        <id>O43741</id>
    </interactant>
    <interactant intactId="EBI-11035148">
        <id>Q8TF50</id>
        <label>ZNF526</label>
    </interactant>
    <organismsDiffer>false</organismsDiffer>
    <experiments>3</experiments>
</comment>
<comment type="interaction">
    <interactant intactId="EBI-1053424">
        <id>O43741</id>
    </interactant>
    <interactant intactId="EBI-745520">
        <id>Q9P0T4</id>
        <label>ZNF581</label>
    </interactant>
    <organismsDiffer>false</organismsDiffer>
    <experiments>3</experiments>
</comment>
<comment type="interaction">
    <interactant intactId="EBI-1053424">
        <id>O43741</id>
    </interactant>
    <interactant intactId="EBI-17234977">
        <id>A0A1U9X8X8</id>
    </interactant>
    <organismsDiffer>false</organismsDiffer>
    <experiments>3</experiments>
</comment>
<comment type="interaction">
    <interactant intactId="EBI-1053424">
        <id>O43741</id>
    </interactant>
    <interactant intactId="EBI-9088990">
        <id>Q7Z783</id>
    </interactant>
    <organismsDiffer>false</organismsDiffer>
    <experiments>3</experiments>
</comment>
<comment type="interaction">
    <interactant intactId="EBI-1053424">
        <id>O43741</id>
    </interactant>
    <interactant intactId="EBI-25900580">
        <id>Q9Y649</id>
    </interactant>
    <organismsDiffer>false</organismsDiffer>
    <experiments>3</experiments>
</comment>
<comment type="alternative products">
    <event type="alternative splicing"/>
    <isoform>
        <id>O43741-1</id>
        <name>1</name>
        <sequence type="displayed"/>
    </isoform>
    <isoform>
        <id>O43741-2</id>
        <name>2</name>
        <sequence type="described" ref="VSP_055820 VSP_055821"/>
    </isoform>
</comment>
<comment type="PTM">
    <text evidence="5">Phosphorylated when associated with the catalytic subunit (PRKAA1 or PRKAA2). Phosphorylated by ULK1 and ULK2; leading to negatively regulate AMPK activity and suggesting the existence of a regulatory feedback loop between ULK1, ULK2 and AMPK.</text>
</comment>
<comment type="similarity">
    <text evidence="7">Belongs to the 5'-AMP-activated protein kinase beta subunit family.</text>
</comment>
<dbReference type="EMBL" id="AJ224538">
    <property type="protein sequence ID" value="CAA12030.1"/>
    <property type="molecule type" value="mRNA"/>
</dbReference>
<dbReference type="EMBL" id="AF504543">
    <property type="protein sequence ID" value="AAM74153.1"/>
    <property type="molecule type" value="Genomic_DNA"/>
</dbReference>
<dbReference type="EMBL" id="AF504538">
    <property type="protein sequence ID" value="AAM74153.1"/>
    <property type="status" value="JOINED"/>
    <property type="molecule type" value="Genomic_DNA"/>
</dbReference>
<dbReference type="EMBL" id="AF504539">
    <property type="protein sequence ID" value="AAM74153.1"/>
    <property type="status" value="JOINED"/>
    <property type="molecule type" value="Genomic_DNA"/>
</dbReference>
<dbReference type="EMBL" id="AF504540">
    <property type="protein sequence ID" value="AAM74153.1"/>
    <property type="status" value="JOINED"/>
    <property type="molecule type" value="Genomic_DNA"/>
</dbReference>
<dbReference type="EMBL" id="AF504541">
    <property type="protein sequence ID" value="AAM74153.1"/>
    <property type="status" value="JOINED"/>
    <property type="molecule type" value="Genomic_DNA"/>
</dbReference>
<dbReference type="EMBL" id="AF504542">
    <property type="protein sequence ID" value="AAM74153.1"/>
    <property type="status" value="JOINED"/>
    <property type="molecule type" value="Genomic_DNA"/>
</dbReference>
<dbReference type="EMBL" id="AK292820">
    <property type="protein sequence ID" value="BAF85509.1"/>
    <property type="molecule type" value="mRNA"/>
</dbReference>
<dbReference type="EMBL" id="AK294863">
    <property type="protein sequence ID" value="BAG57967.1"/>
    <property type="molecule type" value="mRNA"/>
</dbReference>
<dbReference type="EMBL" id="AK316005">
    <property type="protein sequence ID" value="BAH14376.1"/>
    <property type="molecule type" value="mRNA"/>
</dbReference>
<dbReference type="EMBL" id="AL356378">
    <property type="protein sequence ID" value="CAH72644.1"/>
    <property type="molecule type" value="Genomic_DNA"/>
</dbReference>
<dbReference type="EMBL" id="CH471223">
    <property type="protein sequence ID" value="EAW50945.1"/>
    <property type="molecule type" value="Genomic_DNA"/>
</dbReference>
<dbReference type="EMBL" id="BC053610">
    <property type="protein sequence ID" value="AAH53610.1"/>
    <property type="molecule type" value="mRNA"/>
</dbReference>
<dbReference type="CCDS" id="CCDS925.1">
    <molecule id="O43741-1"/>
</dbReference>
<dbReference type="RefSeq" id="NP_005390.1">
    <molecule id="O43741-1"/>
    <property type="nucleotide sequence ID" value="NM_005399.5"/>
</dbReference>
<dbReference type="RefSeq" id="XP_047280494.1">
    <molecule id="O43741-1"/>
    <property type="nucleotide sequence ID" value="XM_047424538.1"/>
</dbReference>
<dbReference type="PDB" id="2F15">
    <property type="method" value="X-ray"/>
    <property type="resolution" value="2.00 A"/>
    <property type="chains" value="A=69-163"/>
</dbReference>
<dbReference type="PDB" id="2V8Q">
    <property type="method" value="X-ray"/>
    <property type="resolution" value="2.10 A"/>
    <property type="chains" value="B=187-272"/>
</dbReference>
<dbReference type="PDB" id="2V92">
    <property type="method" value="X-ray"/>
    <property type="resolution" value="2.40 A"/>
    <property type="chains" value="B=187-272"/>
</dbReference>
<dbReference type="PDB" id="2V9J">
    <property type="method" value="X-ray"/>
    <property type="resolution" value="2.53 A"/>
    <property type="chains" value="B=187-272"/>
</dbReference>
<dbReference type="PDB" id="2Y8L">
    <property type="method" value="X-ray"/>
    <property type="resolution" value="2.50 A"/>
    <property type="chains" value="B=187-272"/>
</dbReference>
<dbReference type="PDB" id="2Y8Q">
    <property type="method" value="X-ray"/>
    <property type="resolution" value="2.80 A"/>
    <property type="chains" value="B=187-270"/>
</dbReference>
<dbReference type="PDB" id="2YA3">
    <property type="method" value="X-ray"/>
    <property type="resolution" value="2.51 A"/>
    <property type="chains" value="B=187-272"/>
</dbReference>
<dbReference type="PDB" id="4CFH">
    <property type="method" value="X-ray"/>
    <property type="resolution" value="3.24 A"/>
    <property type="chains" value="B=187-272"/>
</dbReference>
<dbReference type="PDB" id="4EAI">
    <property type="method" value="X-ray"/>
    <property type="resolution" value="2.28 A"/>
    <property type="chains" value="B=189-272"/>
</dbReference>
<dbReference type="PDB" id="4EAJ">
    <property type="method" value="X-ray"/>
    <property type="resolution" value="2.61 A"/>
    <property type="chains" value="B=189-272"/>
</dbReference>
<dbReference type="PDB" id="4RER">
    <property type="method" value="X-ray"/>
    <property type="resolution" value="4.05 A"/>
    <property type="chains" value="B=76-272"/>
</dbReference>
<dbReference type="PDB" id="4REW">
    <property type="method" value="X-ray"/>
    <property type="resolution" value="4.58 A"/>
    <property type="chains" value="B=76-272"/>
</dbReference>
<dbReference type="PDB" id="6B2E">
    <property type="method" value="X-ray"/>
    <property type="resolution" value="3.80 A"/>
    <property type="chains" value="B=1-272"/>
</dbReference>
<dbReference type="PDB" id="7JHG">
    <property type="method" value="EM"/>
    <property type="resolution" value="3.47 A"/>
    <property type="chains" value="B=75-272"/>
</dbReference>
<dbReference type="PDB" id="7JHH">
    <property type="method" value="EM"/>
    <property type="resolution" value="3.92 A"/>
    <property type="chains" value="B=75-272"/>
</dbReference>
<dbReference type="PDB" id="7JIJ">
    <property type="method" value="X-ray"/>
    <property type="resolution" value="5.50 A"/>
    <property type="chains" value="B=75-272"/>
</dbReference>
<dbReference type="PDB" id="7M74">
    <property type="method" value="EM"/>
    <property type="resolution" value="3.93 A"/>
    <property type="chains" value="B=75-272"/>
</dbReference>
<dbReference type="PDBsum" id="2F15"/>
<dbReference type="PDBsum" id="2V8Q"/>
<dbReference type="PDBsum" id="2V92"/>
<dbReference type="PDBsum" id="2V9J"/>
<dbReference type="PDBsum" id="2Y8L"/>
<dbReference type="PDBsum" id="2Y8Q"/>
<dbReference type="PDBsum" id="2YA3"/>
<dbReference type="PDBsum" id="4CFH"/>
<dbReference type="PDBsum" id="4EAI"/>
<dbReference type="PDBsum" id="4EAJ"/>
<dbReference type="PDBsum" id="4RER"/>
<dbReference type="PDBsum" id="4REW"/>
<dbReference type="PDBsum" id="6B2E"/>
<dbReference type="PDBsum" id="7JHG"/>
<dbReference type="PDBsum" id="7JHH"/>
<dbReference type="PDBsum" id="7JIJ"/>
<dbReference type="PDBsum" id="7M74"/>
<dbReference type="BMRB" id="O43741"/>
<dbReference type="EMDB" id="EMD-22336"/>
<dbReference type="EMDB" id="EMD-22337"/>
<dbReference type="EMDB" id="EMD-23708"/>
<dbReference type="SMR" id="O43741"/>
<dbReference type="BioGRID" id="111552">
    <property type="interactions" value="235"/>
</dbReference>
<dbReference type="ComplexPortal" id="CPX-5790">
    <property type="entry name" value="AMPK complex, alpha2-beta2-gamma1 variant"/>
</dbReference>
<dbReference type="ComplexPortal" id="CPX-5791">
    <property type="entry name" value="AMPK complex, alpha1-beta2-gamma1 variant"/>
</dbReference>
<dbReference type="ComplexPortal" id="CPX-5840">
    <property type="entry name" value="AMPK complex, alpha2-beta2-gamma3 variant"/>
</dbReference>
<dbReference type="ComplexPortal" id="CPX-5841">
    <property type="entry name" value="AMPK complex, alpha1-beta2-gamma3 variant"/>
</dbReference>
<dbReference type="ComplexPortal" id="CPX-5845">
    <property type="entry name" value="AMPK complex, alpha2-beta2-gamma2 variant"/>
</dbReference>
<dbReference type="ComplexPortal" id="CPX-5846">
    <property type="entry name" value="AMPK complex, alpha1-beta2-gamma2 variant"/>
</dbReference>
<dbReference type="CORUM" id="O43741"/>
<dbReference type="DIP" id="DIP-39763N"/>
<dbReference type="FunCoup" id="O43741">
    <property type="interactions" value="2611"/>
</dbReference>
<dbReference type="IntAct" id="O43741">
    <property type="interactions" value="218"/>
</dbReference>
<dbReference type="MINT" id="O43741"/>
<dbReference type="STRING" id="9606.ENSP00000254101"/>
<dbReference type="BindingDB" id="O43741"/>
<dbReference type="ChEMBL" id="CHEMBL2117"/>
<dbReference type="DrugBank" id="DB00945">
    <property type="generic name" value="Acetylsalicylic acid"/>
</dbReference>
<dbReference type="DrugBank" id="DB00131">
    <property type="generic name" value="Adenosine phosphate"/>
</dbReference>
<dbReference type="DrugBank" id="DB12010">
    <property type="generic name" value="Fostamatinib"/>
</dbReference>
<dbReference type="DrugBank" id="DB00273">
    <property type="generic name" value="Topiramate"/>
</dbReference>
<dbReference type="GuidetoPHARMACOLOGY" id="1544"/>
<dbReference type="CAZy" id="CBM48">
    <property type="family name" value="Carbohydrate-Binding Module Family 48"/>
</dbReference>
<dbReference type="iPTMnet" id="O43741"/>
<dbReference type="PhosphoSitePlus" id="O43741"/>
<dbReference type="BioMuta" id="PRKAB2"/>
<dbReference type="jPOST" id="O43741"/>
<dbReference type="MassIVE" id="O43741"/>
<dbReference type="PaxDb" id="9606-ENSP00000254101"/>
<dbReference type="PeptideAtlas" id="O43741"/>
<dbReference type="ProteomicsDB" id="4178"/>
<dbReference type="ProteomicsDB" id="49144">
    <molecule id="O43741-1"/>
</dbReference>
<dbReference type="Pumba" id="O43741"/>
<dbReference type="Antibodypedia" id="33978">
    <property type="antibodies" value="309 antibodies from 34 providers"/>
</dbReference>
<dbReference type="DNASU" id="5565"/>
<dbReference type="Ensembl" id="ENST00000254101.4">
    <molecule id="O43741-1"/>
    <property type="protein sequence ID" value="ENSP00000254101.3"/>
    <property type="gene ID" value="ENSG00000131791.8"/>
</dbReference>
<dbReference type="GeneID" id="5565"/>
<dbReference type="KEGG" id="hsa:5565"/>
<dbReference type="MANE-Select" id="ENST00000254101.4">
    <property type="protein sequence ID" value="ENSP00000254101.3"/>
    <property type="RefSeq nucleotide sequence ID" value="NM_005399.5"/>
    <property type="RefSeq protein sequence ID" value="NP_005390.1"/>
</dbReference>
<dbReference type="UCSC" id="uc001epe.5">
    <molecule id="O43741-1"/>
    <property type="organism name" value="human"/>
</dbReference>
<dbReference type="AGR" id="HGNC:9379"/>
<dbReference type="CTD" id="5565"/>
<dbReference type="DisGeNET" id="5565"/>
<dbReference type="GeneCards" id="PRKAB2"/>
<dbReference type="HGNC" id="HGNC:9379">
    <property type="gene designation" value="PRKAB2"/>
</dbReference>
<dbReference type="HPA" id="ENSG00000131791">
    <property type="expression patterns" value="Tissue enhanced (skeletal muscle, tongue)"/>
</dbReference>
<dbReference type="MIM" id="602741">
    <property type="type" value="gene"/>
</dbReference>
<dbReference type="neXtProt" id="NX_O43741"/>
<dbReference type="OpenTargets" id="ENSG00000131791"/>
<dbReference type="PharmGKB" id="PA33747"/>
<dbReference type="VEuPathDB" id="HostDB:ENSG00000131791"/>
<dbReference type="eggNOG" id="KOG1616">
    <property type="taxonomic scope" value="Eukaryota"/>
</dbReference>
<dbReference type="GeneTree" id="ENSGT00940000159284"/>
<dbReference type="HOGENOM" id="CLU_070949_2_0_1"/>
<dbReference type="InParanoid" id="O43741"/>
<dbReference type="OMA" id="HEYKFMV"/>
<dbReference type="OrthoDB" id="531008at2759"/>
<dbReference type="PAN-GO" id="O43741">
    <property type="GO annotations" value="5 GO annotations based on evolutionary models"/>
</dbReference>
<dbReference type="PhylomeDB" id="O43741"/>
<dbReference type="TreeFam" id="TF313827"/>
<dbReference type="BRENDA" id="2.7.11.31">
    <property type="organism ID" value="2681"/>
</dbReference>
<dbReference type="PathwayCommons" id="O43741"/>
<dbReference type="Reactome" id="R-HSA-1445148">
    <property type="pathway name" value="Translocation of SLC2A4 (GLUT4) to the plasma membrane"/>
</dbReference>
<dbReference type="Reactome" id="R-HSA-1632852">
    <property type="pathway name" value="Macroautophagy"/>
</dbReference>
<dbReference type="Reactome" id="R-HSA-163680">
    <property type="pathway name" value="AMPK inhibits chREBP transcriptional activation activity"/>
</dbReference>
<dbReference type="Reactome" id="R-HSA-200425">
    <property type="pathway name" value="Carnitine shuttle"/>
</dbReference>
<dbReference type="Reactome" id="R-HSA-2151209">
    <property type="pathway name" value="Activation of PPARGC1A (PGC-1alpha) by phosphorylation"/>
</dbReference>
<dbReference type="Reactome" id="R-HSA-380972">
    <property type="pathway name" value="Energy dependent regulation of mTOR by LKB1-AMPK"/>
</dbReference>
<dbReference type="Reactome" id="R-HSA-5628897">
    <property type="pathway name" value="TP53 Regulates Metabolic Genes"/>
</dbReference>
<dbReference type="Reactome" id="R-HSA-6804756">
    <property type="pathway name" value="Regulation of TP53 Activity through Phosphorylation"/>
</dbReference>
<dbReference type="Reactome" id="R-HSA-9613354">
    <property type="pathway name" value="Lipophagy"/>
</dbReference>
<dbReference type="Reactome" id="R-HSA-9619483">
    <property type="pathway name" value="Activation of AMPK downstream of NMDARs"/>
</dbReference>
<dbReference type="SignaLink" id="O43741"/>
<dbReference type="SIGNOR" id="O43741"/>
<dbReference type="BioGRID-ORCS" id="5565">
    <property type="hits" value="18 hits in 1169 CRISPR screens"/>
</dbReference>
<dbReference type="ChiTaRS" id="PRKAB2">
    <property type="organism name" value="human"/>
</dbReference>
<dbReference type="EvolutionaryTrace" id="O43741"/>
<dbReference type="GeneWiki" id="PRKAB2"/>
<dbReference type="GenomeRNAi" id="5565"/>
<dbReference type="Pharos" id="O43741">
    <property type="development level" value="Tchem"/>
</dbReference>
<dbReference type="PRO" id="PR:O43741"/>
<dbReference type="Proteomes" id="UP000005640">
    <property type="component" value="Chromosome 1"/>
</dbReference>
<dbReference type="RNAct" id="O43741">
    <property type="molecule type" value="protein"/>
</dbReference>
<dbReference type="Bgee" id="ENSG00000131791">
    <property type="expression patterns" value="Expressed in jejunal mucosa and 192 other cell types or tissues"/>
</dbReference>
<dbReference type="GO" id="GO:0005737">
    <property type="term" value="C:cytoplasm"/>
    <property type="evidence" value="ECO:0000318"/>
    <property type="project" value="GO_Central"/>
</dbReference>
<dbReference type="GO" id="GO:0005829">
    <property type="term" value="C:cytosol"/>
    <property type="evidence" value="ECO:0000304"/>
    <property type="project" value="Reactome"/>
</dbReference>
<dbReference type="GO" id="GO:0005654">
    <property type="term" value="C:nucleoplasm"/>
    <property type="evidence" value="ECO:0000304"/>
    <property type="project" value="Reactome"/>
</dbReference>
<dbReference type="GO" id="GO:0031588">
    <property type="term" value="C:nucleotide-activated protein kinase complex"/>
    <property type="evidence" value="ECO:0000314"/>
    <property type="project" value="UniProtKB"/>
</dbReference>
<dbReference type="GO" id="GO:0005634">
    <property type="term" value="C:nucleus"/>
    <property type="evidence" value="ECO:0000318"/>
    <property type="project" value="GO_Central"/>
</dbReference>
<dbReference type="GO" id="GO:0019901">
    <property type="term" value="F:protein kinase binding"/>
    <property type="evidence" value="ECO:0000318"/>
    <property type="project" value="GO_Central"/>
</dbReference>
<dbReference type="GO" id="GO:0031669">
    <property type="term" value="P:cellular response to nutrient levels"/>
    <property type="evidence" value="ECO:0000314"/>
    <property type="project" value="ComplexPortal"/>
</dbReference>
<dbReference type="GO" id="GO:0006633">
    <property type="term" value="P:fatty acid biosynthetic process"/>
    <property type="evidence" value="ECO:0007669"/>
    <property type="project" value="UniProtKB-KW"/>
</dbReference>
<dbReference type="GO" id="GO:0120162">
    <property type="term" value="P:positive regulation of cold-induced thermogenesis"/>
    <property type="evidence" value="ECO:0000250"/>
    <property type="project" value="YuBioLab"/>
</dbReference>
<dbReference type="GO" id="GO:0007165">
    <property type="term" value="P:signal transduction"/>
    <property type="evidence" value="ECO:0000318"/>
    <property type="project" value="GO_Central"/>
</dbReference>
<dbReference type="CDD" id="cd02859">
    <property type="entry name" value="E_set_AMPKbeta_like_N"/>
    <property type="match status" value="1"/>
</dbReference>
<dbReference type="FunFam" id="2.60.40.10:FF:000139">
    <property type="entry name" value="Protein kinase AMP-activated non-catalytic subunit beta 1"/>
    <property type="match status" value="1"/>
</dbReference>
<dbReference type="Gene3D" id="6.20.250.60">
    <property type="match status" value="1"/>
</dbReference>
<dbReference type="Gene3D" id="2.60.40.10">
    <property type="entry name" value="Immunoglobulins"/>
    <property type="match status" value="1"/>
</dbReference>
<dbReference type="InterPro" id="IPR032640">
    <property type="entry name" value="AMPK1_CBM"/>
</dbReference>
<dbReference type="InterPro" id="IPR006828">
    <property type="entry name" value="ASC_dom"/>
</dbReference>
<dbReference type="InterPro" id="IPR037256">
    <property type="entry name" value="ASC_dom_sf"/>
</dbReference>
<dbReference type="InterPro" id="IPR050827">
    <property type="entry name" value="CRP1_MDG1_kinase"/>
</dbReference>
<dbReference type="InterPro" id="IPR013783">
    <property type="entry name" value="Ig-like_fold"/>
</dbReference>
<dbReference type="InterPro" id="IPR014756">
    <property type="entry name" value="Ig_E-set"/>
</dbReference>
<dbReference type="PANTHER" id="PTHR10343">
    <property type="entry name" value="5'-AMP-ACTIVATED PROTEIN KINASE , BETA SUBUNIT"/>
    <property type="match status" value="1"/>
</dbReference>
<dbReference type="PANTHER" id="PTHR10343:SF92">
    <property type="entry name" value="5'-AMP-ACTIVATED PROTEIN KINASE SUBUNIT BETA-2"/>
    <property type="match status" value="1"/>
</dbReference>
<dbReference type="Pfam" id="PF16561">
    <property type="entry name" value="AMPK1_CBM"/>
    <property type="match status" value="1"/>
</dbReference>
<dbReference type="Pfam" id="PF04739">
    <property type="entry name" value="AMPKBI"/>
    <property type="match status" value="1"/>
</dbReference>
<dbReference type="SMART" id="SM01010">
    <property type="entry name" value="AMPKBI"/>
    <property type="match status" value="1"/>
</dbReference>
<dbReference type="SUPFAM" id="SSF160219">
    <property type="entry name" value="AMPKBI-like"/>
    <property type="match status" value="1"/>
</dbReference>
<dbReference type="SUPFAM" id="SSF81296">
    <property type="entry name" value="E set domains"/>
    <property type="match status" value="1"/>
</dbReference>
<feature type="chain" id="PRO_0000204368" description="5'-AMP-activated protein kinase subunit beta-2">
    <location>
        <begin position="1"/>
        <end position="272"/>
    </location>
</feature>
<feature type="region of interest" description="Disordered" evidence="2">
    <location>
        <begin position="1"/>
        <end position="52"/>
    </location>
</feature>
<feature type="modified residue" description="Phosphoserine" evidence="1">
    <location>
        <position position="39"/>
    </location>
</feature>
<feature type="modified residue" description="Phosphothreonine" evidence="1">
    <location>
        <position position="40"/>
    </location>
</feature>
<feature type="modified residue" description="Phosphoserine; by ULK1" evidence="1">
    <location>
        <position position="69"/>
    </location>
</feature>
<feature type="modified residue" description="Phosphoserine" evidence="16">
    <location>
        <position position="95"/>
    </location>
</feature>
<feature type="modified residue" description="Phosphoserine" evidence="8 9 10 11 12 14 15 16">
    <location>
        <position position="108"/>
    </location>
</feature>
<feature type="modified residue" description="Phosphothreonine" evidence="16">
    <location>
        <position position="148"/>
    </location>
</feature>
<feature type="modified residue" description="Phosphoserine" evidence="16">
    <location>
        <position position="158"/>
    </location>
</feature>
<feature type="modified residue" description="Phosphoserine" evidence="16">
    <location>
        <position position="170"/>
    </location>
</feature>
<feature type="modified residue" description="Phosphoserine" evidence="1">
    <location>
        <position position="174"/>
    </location>
</feature>
<feature type="modified residue" description="Phosphoserine" evidence="9 13">
    <location>
        <position position="184"/>
    </location>
</feature>
<feature type="splice variant" id="VSP_055820" description="In isoform 2." evidence="6">
    <original>MGNTTSDRVSGERHGAKAARSEGAG</original>
    <variation>MPRGRSTRSWWGVRTTPACSASLTP</variation>
    <location>
        <begin position="1"/>
        <end position="25"/>
    </location>
</feature>
<feature type="splice variant" id="VSP_055821" description="In isoform 2." evidence="6">
    <location>
        <begin position="26"/>
        <end position="107"/>
    </location>
</feature>
<feature type="mutagenesis site" description="Results in an AMPK enzyme that is activable by phosphorylation but has significantly increased rate of dephosphorylation in phosphatase assays." evidence="4">
    <original>H</original>
    <variation>A</variation>
    <location>
        <position position="235"/>
    </location>
</feature>
<feature type="strand" evidence="17">
    <location>
        <begin position="76"/>
        <end position="83"/>
    </location>
</feature>
<feature type="strand" evidence="17">
    <location>
        <begin position="90"/>
        <end position="94"/>
    </location>
</feature>
<feature type="helix" evidence="17">
    <location>
        <begin position="95"/>
        <end position="97"/>
    </location>
</feature>
<feature type="strand" evidence="17">
    <location>
        <begin position="112"/>
        <end position="129"/>
    </location>
</feature>
<feature type="strand" evidence="17">
    <location>
        <begin position="132"/>
        <end position="134"/>
    </location>
</feature>
<feature type="strand" evidence="17">
    <location>
        <begin position="141"/>
        <end position="143"/>
    </location>
</feature>
<feature type="strand" evidence="17">
    <location>
        <begin position="149"/>
        <end position="155"/>
    </location>
</feature>
<feature type="turn" evidence="17">
    <location>
        <begin position="159"/>
        <end position="162"/>
    </location>
</feature>
<feature type="strand" evidence="18">
    <location>
        <begin position="201"/>
        <end position="204"/>
    </location>
</feature>
<feature type="helix" evidence="20">
    <location>
        <begin position="210"/>
        <end position="213"/>
    </location>
</feature>
<feature type="strand" evidence="18">
    <location>
        <begin position="214"/>
        <end position="217"/>
    </location>
</feature>
<feature type="strand" evidence="22">
    <location>
        <begin position="223"/>
        <end position="225"/>
    </location>
</feature>
<feature type="turn" evidence="19">
    <location>
        <begin position="236"/>
        <end position="239"/>
    </location>
</feature>
<feature type="strand" evidence="21">
    <location>
        <begin position="242"/>
        <end position="244"/>
    </location>
</feature>
<feature type="strand" evidence="18">
    <location>
        <begin position="250"/>
        <end position="259"/>
    </location>
</feature>
<feature type="strand" evidence="18">
    <location>
        <begin position="262"/>
        <end position="271"/>
    </location>
</feature>
<evidence type="ECO:0000250" key="1">
    <source>
        <dbReference type="UniProtKB" id="Q9QZH4"/>
    </source>
</evidence>
<evidence type="ECO:0000256" key="2">
    <source>
        <dbReference type="SAM" id="MobiDB-lite"/>
    </source>
</evidence>
<evidence type="ECO:0000269" key="3">
    <source>
    </source>
</evidence>
<evidence type="ECO:0000269" key="4">
    <source>
    </source>
</evidence>
<evidence type="ECO:0000269" key="5">
    <source>
    </source>
</evidence>
<evidence type="ECO:0000303" key="6">
    <source>
    </source>
</evidence>
<evidence type="ECO:0000305" key="7"/>
<evidence type="ECO:0007744" key="8">
    <source>
    </source>
</evidence>
<evidence type="ECO:0007744" key="9">
    <source>
    </source>
</evidence>
<evidence type="ECO:0007744" key="10">
    <source>
    </source>
</evidence>
<evidence type="ECO:0007744" key="11">
    <source>
    </source>
</evidence>
<evidence type="ECO:0007744" key="12">
    <source>
    </source>
</evidence>
<evidence type="ECO:0007744" key="13">
    <source>
    </source>
</evidence>
<evidence type="ECO:0007744" key="14">
    <source>
    </source>
</evidence>
<evidence type="ECO:0007744" key="15">
    <source>
    </source>
</evidence>
<evidence type="ECO:0007744" key="16">
    <source>
    </source>
</evidence>
<evidence type="ECO:0007829" key="17">
    <source>
        <dbReference type="PDB" id="2F15"/>
    </source>
</evidence>
<evidence type="ECO:0007829" key="18">
    <source>
        <dbReference type="PDB" id="2V8Q"/>
    </source>
</evidence>
<evidence type="ECO:0007829" key="19">
    <source>
        <dbReference type="PDB" id="2V92"/>
    </source>
</evidence>
<evidence type="ECO:0007829" key="20">
    <source>
        <dbReference type="PDB" id="4CFH"/>
    </source>
</evidence>
<evidence type="ECO:0007829" key="21">
    <source>
        <dbReference type="PDB" id="4EAI"/>
    </source>
</evidence>
<evidence type="ECO:0007829" key="22">
    <source>
        <dbReference type="PDB" id="7JHG"/>
    </source>
</evidence>
<name>AAKB2_HUMAN</name>
<keyword id="KW-0002">3D-structure</keyword>
<keyword id="KW-0025">Alternative splicing</keyword>
<keyword id="KW-0275">Fatty acid biosynthesis</keyword>
<keyword id="KW-0276">Fatty acid metabolism</keyword>
<keyword id="KW-0444">Lipid biosynthesis</keyword>
<keyword id="KW-0443">Lipid metabolism</keyword>
<keyword id="KW-0597">Phosphoprotein</keyword>
<keyword id="KW-1267">Proteomics identification</keyword>
<keyword id="KW-1185">Reference proteome</keyword>
<protein>
    <recommendedName>
        <fullName>5'-AMP-activated protein kinase subunit beta-2</fullName>
        <shortName>AMPK subunit beta-2</shortName>
    </recommendedName>
</protein>
<proteinExistence type="evidence at protein level"/>